<proteinExistence type="evidence at protein level"/>
<reference key="1">
    <citation type="journal article" date="1984" name="EMBO J.">
        <title>The glyceraldehyde 3 phosphate dehydrogenase gene family: structure of a human cDNA and of an X chromosome linked pseudogene; amazing complexity of the gene family in mouse.</title>
        <authorList>
            <person name="Hanauer A."/>
            <person name="Mandel J.-L."/>
        </authorList>
    </citation>
    <scope>NUCLEOTIDE SEQUENCE [MRNA]</scope>
</reference>
<reference key="2">
    <citation type="journal article" date="1984" name="Nucleic Acids Res.">
        <title>The complete sequence of a full length cDNA for human liver glyceraldehyde-3-phosphate dehydrogenase: evidence for multiple mRNA species.</title>
        <authorList>
            <person name="Arcari P."/>
            <person name="Martinelli R."/>
            <person name="Salvatore F."/>
        </authorList>
    </citation>
    <scope>NUCLEOTIDE SEQUENCE [MRNA]</scope>
</reference>
<reference key="3">
    <citation type="journal article" date="1985" name="Nucleic Acids Res.">
        <title>Isolation and characterization of rat and human glyceraldehyde-3-phosphate dehydrogenase cDNAs: genomic complexity and molecular evolution of the gene.</title>
        <authorList>
            <person name="Tso J.Y."/>
            <person name="Sun X.-H."/>
            <person name="Kao T.-H."/>
            <person name="Reece K.S."/>
            <person name="Wu R."/>
        </authorList>
    </citation>
    <scope>NUCLEOTIDE SEQUENCE [MRNA]</scope>
    <source>
        <tissue>Liver</tissue>
    </source>
</reference>
<reference key="4">
    <citation type="journal article" date="1987" name="Cancer Res.">
        <title>Enhanced expression of a glyceraldehyde-3-phosphate dehydrogenase gene in human lung cancers.</title>
        <authorList>
            <person name="Tokunaga K."/>
            <person name="Nakamura Y."/>
            <person name="Sakata K."/>
            <person name="Fujimori K."/>
            <person name="Ohkubo M."/>
            <person name="Sawada K."/>
            <person name="Sakiyama S."/>
        </authorList>
    </citation>
    <scope>NUCLEOTIDE SEQUENCE [MRNA]</scope>
    <source>
        <tissue>Lung</tissue>
    </source>
</reference>
<reference key="5">
    <citation type="journal article" date="1987" name="J. Biol. Chem.">
        <title>Identification of the 37-kDa protein displaying a variable interaction with the erythroid cell membrane as glyceraldehyde-3-phosphate dehydrogenase.</title>
        <authorList>
            <person name="Allen R.W."/>
            <person name="Trach K.A."/>
            <person name="Hoch J.A."/>
        </authorList>
    </citation>
    <scope>NUCLEOTIDE SEQUENCE [MRNA]</scope>
</reference>
<reference key="6">
    <citation type="journal article" date="1988" name="J. Biol. Chem.">
        <title>Isolation and complete sequence of a functional human glyceraldehyde-3-phosphate dehydrogenase gene.</title>
        <authorList>
            <person name="Ercolani L."/>
            <person name="Florence B."/>
            <person name="Denaro M."/>
            <person name="Alexander M."/>
        </authorList>
    </citation>
    <scope>NUCLEOTIDE SEQUENCE [GENOMIC DNA]</scope>
    <scope>FUNCTION</scope>
    <scope>CATALYTIC ACTIVITY</scope>
</reference>
<reference key="7">
    <citation type="journal article" date="1991" name="Proc. Natl. Acad. Sci. U.S.A.">
        <title>A human nuclear uracil DNA glycosylase is the 37-kDa subunit of glyceraldehyde-3-phosphate dehydrogenase.</title>
        <authorList>
            <person name="Meyer-Siegler K."/>
            <person name="Mauro D.J."/>
            <person name="Seal G."/>
            <person name="Wurzer J."/>
            <person name="Deriel J.K."/>
            <person name="Sirover M.A."/>
        </authorList>
    </citation>
    <scope>NUCLEOTIDE SEQUENCE [MRNA]</scope>
    <source>
        <tissue>Placenta</tissue>
    </source>
</reference>
<reference key="8">
    <citation type="journal article" date="2000" name="Biochem. Biophys. Res. Commun.">
        <title>cDNA cloning by amplification of circularized first strand cDNAs reveals non-IRE-regulated iron-responsive mRNAs.</title>
        <authorList>
            <person name="Ye Z."/>
            <person name="Connor J.R."/>
        </authorList>
    </citation>
    <scope>NUCLEOTIDE SEQUENCE [MRNA]</scope>
    <source>
        <tissue>Astrocytoma</tissue>
    </source>
</reference>
<reference key="9">
    <citation type="submission" date="2000-07" db="EMBL/GenBank/DDBJ databases">
        <title>Pediatric leukemia cDNA sequencing project.</title>
        <authorList>
            <person name="Zhou J."/>
            <person name="Yu W."/>
            <person name="Tang H."/>
            <person name="Mei G."/>
            <person name="Tsang Y.T.M."/>
            <person name="Bouck J."/>
            <person name="Gibbs R.A."/>
            <person name="Margolin J.F."/>
        </authorList>
    </citation>
    <scope>NUCLEOTIDE SEQUENCE [LARGE SCALE MRNA]</scope>
    <source>
        <tissue>Leukemia</tissue>
    </source>
</reference>
<reference key="10">
    <citation type="submission" date="2001-05" db="EMBL/GenBank/DDBJ databases">
        <title>Identification of immuno-peptidmics that are recognized by tumor-reactive CTL generated from TIL of colon cancer patients.</title>
        <authorList>
            <person name="Shichijo S."/>
            <person name="Itoh K."/>
        </authorList>
    </citation>
    <scope>NUCLEOTIDE SEQUENCE [LARGE SCALE MRNA]</scope>
    <source>
        <tissue>Colon adenocarcinoma</tissue>
    </source>
</reference>
<reference key="11">
    <citation type="submission" date="2003-05" db="EMBL/GenBank/DDBJ databases">
        <title>Cloning of human full-length CDSs in BD Creator(TM) system donor vector.</title>
        <authorList>
            <person name="Kalnine N."/>
            <person name="Chen X."/>
            <person name="Rolfs A."/>
            <person name="Halleck A."/>
            <person name="Hines L."/>
            <person name="Eisenstein S."/>
            <person name="Koundinya M."/>
            <person name="Raphael J."/>
            <person name="Moreira D."/>
            <person name="Kelley T."/>
            <person name="LaBaer J."/>
            <person name="Lin Y."/>
            <person name="Phelan M."/>
            <person name="Farmer A."/>
        </authorList>
    </citation>
    <scope>NUCLEOTIDE SEQUENCE [LARGE SCALE MRNA]</scope>
</reference>
<reference key="12">
    <citation type="submission" date="2003-07" db="EMBL/GenBank/DDBJ databases">
        <authorList>
            <consortium name="NIEHS SNPs program"/>
        </authorList>
    </citation>
    <scope>NUCLEOTIDE SEQUENCE [GENOMIC DNA]</scope>
    <scope>VARIANT GLY-22</scope>
</reference>
<reference key="13">
    <citation type="submission" date="2004-05" db="EMBL/GenBank/DDBJ databases">
        <title>Cloning of human full open reading frames in Gateway(TM) system entry vector (pDONR201).</title>
        <authorList>
            <person name="Ebert L."/>
            <person name="Schick M."/>
            <person name="Neubert P."/>
            <person name="Schatten R."/>
            <person name="Henze S."/>
            <person name="Korn B."/>
        </authorList>
    </citation>
    <scope>NUCLEOTIDE SEQUENCE [LARGE SCALE MRNA]</scope>
</reference>
<reference key="14">
    <citation type="journal article" date="2006" name="Nature">
        <title>The finished DNA sequence of human chromosome 12.</title>
        <authorList>
            <person name="Scherer S.E."/>
            <person name="Muzny D.M."/>
            <person name="Buhay C.J."/>
            <person name="Chen R."/>
            <person name="Cree A."/>
            <person name="Ding Y."/>
            <person name="Dugan-Rocha S."/>
            <person name="Gill R."/>
            <person name="Gunaratne P."/>
            <person name="Harris R.A."/>
            <person name="Hawes A.C."/>
            <person name="Hernandez J."/>
            <person name="Hodgson A.V."/>
            <person name="Hume J."/>
            <person name="Jackson A."/>
            <person name="Khan Z.M."/>
            <person name="Kovar-Smith C."/>
            <person name="Lewis L.R."/>
            <person name="Lozado R.J."/>
            <person name="Metzker M.L."/>
            <person name="Milosavljevic A."/>
            <person name="Miner G.R."/>
            <person name="Montgomery K.T."/>
            <person name="Morgan M.B."/>
            <person name="Nazareth L.V."/>
            <person name="Scott G."/>
            <person name="Sodergren E."/>
            <person name="Song X.-Z."/>
            <person name="Steffen D."/>
            <person name="Lovering R.C."/>
            <person name="Wheeler D.A."/>
            <person name="Worley K.C."/>
            <person name="Yuan Y."/>
            <person name="Zhang Z."/>
            <person name="Adams C.Q."/>
            <person name="Ansari-Lari M.A."/>
            <person name="Ayele M."/>
            <person name="Brown M.J."/>
            <person name="Chen G."/>
            <person name="Chen Z."/>
            <person name="Clerc-Blankenburg K.P."/>
            <person name="Davis C."/>
            <person name="Delgado O."/>
            <person name="Dinh H.H."/>
            <person name="Draper H."/>
            <person name="Gonzalez-Garay M.L."/>
            <person name="Havlak P."/>
            <person name="Jackson L.R."/>
            <person name="Jacob L.S."/>
            <person name="Kelly S.H."/>
            <person name="Li L."/>
            <person name="Li Z."/>
            <person name="Liu J."/>
            <person name="Liu W."/>
            <person name="Lu J."/>
            <person name="Maheshwari M."/>
            <person name="Nguyen B.-V."/>
            <person name="Okwuonu G.O."/>
            <person name="Pasternak S."/>
            <person name="Perez L.M."/>
            <person name="Plopper F.J.H."/>
            <person name="Santibanez J."/>
            <person name="Shen H."/>
            <person name="Tabor P.E."/>
            <person name="Verduzco D."/>
            <person name="Waldron L."/>
            <person name="Wang Q."/>
            <person name="Williams G.A."/>
            <person name="Zhang J."/>
            <person name="Zhou J."/>
            <person name="Allen C.C."/>
            <person name="Amin A.G."/>
            <person name="Anyalebechi V."/>
            <person name="Bailey M."/>
            <person name="Barbaria J.A."/>
            <person name="Bimage K.E."/>
            <person name="Bryant N.P."/>
            <person name="Burch P.E."/>
            <person name="Burkett C.E."/>
            <person name="Burrell K.L."/>
            <person name="Calderon E."/>
            <person name="Cardenas V."/>
            <person name="Carter K."/>
            <person name="Casias K."/>
            <person name="Cavazos I."/>
            <person name="Cavazos S.R."/>
            <person name="Ceasar H."/>
            <person name="Chacko J."/>
            <person name="Chan S.N."/>
            <person name="Chavez D."/>
            <person name="Christopoulos C."/>
            <person name="Chu J."/>
            <person name="Cockrell R."/>
            <person name="Cox C.D."/>
            <person name="Dang M."/>
            <person name="Dathorne S.R."/>
            <person name="David R."/>
            <person name="Davis C.M."/>
            <person name="Davy-Carroll L."/>
            <person name="Deshazo D.R."/>
            <person name="Donlin J.E."/>
            <person name="D'Souza L."/>
            <person name="Eaves K.A."/>
            <person name="Egan A."/>
            <person name="Emery-Cohen A.J."/>
            <person name="Escotto M."/>
            <person name="Flagg N."/>
            <person name="Forbes L.D."/>
            <person name="Gabisi A.M."/>
            <person name="Garza M."/>
            <person name="Hamilton C."/>
            <person name="Henderson N."/>
            <person name="Hernandez O."/>
            <person name="Hines S."/>
            <person name="Hogues M.E."/>
            <person name="Huang M."/>
            <person name="Idlebird D.G."/>
            <person name="Johnson R."/>
            <person name="Jolivet A."/>
            <person name="Jones S."/>
            <person name="Kagan R."/>
            <person name="King L.M."/>
            <person name="Leal B."/>
            <person name="Lebow H."/>
            <person name="Lee S."/>
            <person name="LeVan J.M."/>
            <person name="Lewis L.C."/>
            <person name="London P."/>
            <person name="Lorensuhewa L.M."/>
            <person name="Loulseged H."/>
            <person name="Lovett D.A."/>
            <person name="Lucier A."/>
            <person name="Lucier R.L."/>
            <person name="Ma J."/>
            <person name="Madu R.C."/>
            <person name="Mapua P."/>
            <person name="Martindale A.D."/>
            <person name="Martinez E."/>
            <person name="Massey E."/>
            <person name="Mawhiney S."/>
            <person name="Meador M.G."/>
            <person name="Mendez S."/>
            <person name="Mercado C."/>
            <person name="Mercado I.C."/>
            <person name="Merritt C.E."/>
            <person name="Miner Z.L."/>
            <person name="Minja E."/>
            <person name="Mitchell T."/>
            <person name="Mohabbat F."/>
            <person name="Mohabbat K."/>
            <person name="Montgomery B."/>
            <person name="Moore N."/>
            <person name="Morris S."/>
            <person name="Munidasa M."/>
            <person name="Ngo R.N."/>
            <person name="Nguyen N.B."/>
            <person name="Nickerson E."/>
            <person name="Nwaokelemeh O.O."/>
            <person name="Nwokenkwo S."/>
            <person name="Obregon M."/>
            <person name="Oguh M."/>
            <person name="Oragunye N."/>
            <person name="Oviedo R.J."/>
            <person name="Parish B.J."/>
            <person name="Parker D.N."/>
            <person name="Parrish J."/>
            <person name="Parks K.L."/>
            <person name="Paul H.A."/>
            <person name="Payton B.A."/>
            <person name="Perez A."/>
            <person name="Perrin W."/>
            <person name="Pickens A."/>
            <person name="Primus E.L."/>
            <person name="Pu L.-L."/>
            <person name="Puazo M."/>
            <person name="Quiles M.M."/>
            <person name="Quiroz J.B."/>
            <person name="Rabata D."/>
            <person name="Reeves K."/>
            <person name="Ruiz S.J."/>
            <person name="Shao H."/>
            <person name="Sisson I."/>
            <person name="Sonaike T."/>
            <person name="Sorelle R.P."/>
            <person name="Sutton A.E."/>
            <person name="Svatek A.F."/>
            <person name="Svetz L.A."/>
            <person name="Tamerisa K.S."/>
            <person name="Taylor T.R."/>
            <person name="Teague B."/>
            <person name="Thomas N."/>
            <person name="Thorn R.D."/>
            <person name="Trejos Z.Y."/>
            <person name="Trevino B.K."/>
            <person name="Ukegbu O.N."/>
            <person name="Urban J.B."/>
            <person name="Vasquez L.I."/>
            <person name="Vera V.A."/>
            <person name="Villasana D.M."/>
            <person name="Wang L."/>
            <person name="Ward-Moore S."/>
            <person name="Warren J.T."/>
            <person name="Wei X."/>
            <person name="White F."/>
            <person name="Williamson A.L."/>
            <person name="Wleczyk R."/>
            <person name="Wooden H.S."/>
            <person name="Wooden S.H."/>
            <person name="Yen J."/>
            <person name="Yoon L."/>
            <person name="Yoon V."/>
            <person name="Zorrilla S.E."/>
            <person name="Nelson D."/>
            <person name="Kucherlapati R."/>
            <person name="Weinstock G."/>
            <person name="Gibbs R.A."/>
        </authorList>
    </citation>
    <scope>NUCLEOTIDE SEQUENCE [LARGE SCALE GENOMIC DNA]</scope>
</reference>
<reference key="15">
    <citation type="submission" date="2005-09" db="EMBL/GenBank/DDBJ databases">
        <authorList>
            <person name="Mural R.J."/>
            <person name="Istrail S."/>
            <person name="Sutton G.G."/>
            <person name="Florea L."/>
            <person name="Halpern A.L."/>
            <person name="Mobarry C.M."/>
            <person name="Lippert R."/>
            <person name="Walenz B."/>
            <person name="Shatkay H."/>
            <person name="Dew I."/>
            <person name="Miller J.R."/>
            <person name="Flanigan M.J."/>
            <person name="Edwards N.J."/>
            <person name="Bolanos R."/>
            <person name="Fasulo D."/>
            <person name="Halldorsson B.V."/>
            <person name="Hannenhalli S."/>
            <person name="Turner R."/>
            <person name="Yooseph S."/>
            <person name="Lu F."/>
            <person name="Nusskern D.R."/>
            <person name="Shue B.C."/>
            <person name="Zheng X.H."/>
            <person name="Zhong F."/>
            <person name="Delcher A.L."/>
            <person name="Huson D.H."/>
            <person name="Kravitz S.A."/>
            <person name="Mouchard L."/>
            <person name="Reinert K."/>
            <person name="Remington K.A."/>
            <person name="Clark A.G."/>
            <person name="Waterman M.S."/>
            <person name="Eichler E.E."/>
            <person name="Adams M.D."/>
            <person name="Hunkapiller M.W."/>
            <person name="Myers E.W."/>
            <person name="Venter J.C."/>
        </authorList>
    </citation>
    <scope>NUCLEOTIDE SEQUENCE [LARGE SCALE GENOMIC DNA]</scope>
</reference>
<reference key="16">
    <citation type="journal article" date="2004" name="Genome Res.">
        <title>The status, quality, and expansion of the NIH full-length cDNA project: the Mammalian Gene Collection (MGC).</title>
        <authorList>
            <consortium name="The MGC Project Team"/>
        </authorList>
    </citation>
    <scope>NUCLEOTIDE SEQUENCE [LARGE SCALE MRNA]</scope>
    <source>
        <tissue>Eye</tissue>
        <tissue>Kidney</tissue>
        <tissue>Lung</tissue>
        <tissue>Lymph</tissue>
        <tissue>Placenta</tissue>
    </source>
</reference>
<reference key="17">
    <citation type="journal article" date="1981" name="FEBS Lett.">
        <title>The complete amino acid sequence of human muscle glyceraldehyde 3-phosphate dehydrogenase.</title>
        <authorList>
            <person name="Nowak K."/>
            <person name="Wolny M."/>
            <person name="Banas T."/>
        </authorList>
    </citation>
    <scope>PRELIMINARY PROTEIN SEQUENCE OF 2-335</scope>
    <source>
        <tissue>Muscle</tissue>
    </source>
</reference>
<reference key="18">
    <citation type="journal article" date="2003" name="Nat. Biotechnol.">
        <title>Exploring proteomes and analyzing protein processing by mass spectrometric identification of sorted N-terminal peptides.</title>
        <authorList>
            <person name="Gevaert K."/>
            <person name="Goethals M."/>
            <person name="Martens L."/>
            <person name="Van Damme J."/>
            <person name="Staes A."/>
            <person name="Thomas G.R."/>
            <person name="Vandekerckhove J."/>
        </authorList>
    </citation>
    <scope>PROTEIN SEQUENCE OF 2-13</scope>
    <source>
        <tissue>Platelet</tissue>
    </source>
</reference>
<reference key="19">
    <citation type="submission" date="2009-07" db="UniProtKB">
        <authorList>
            <person name="Bienvenut W.V."/>
            <person name="Gao M."/>
            <person name="Leug H."/>
        </authorList>
    </citation>
    <scope>PROTEIN SEQUENCE OF 2-13; 62-84; 118-139; 198-215; 220-227; 235-248 AND 310-335</scope>
    <scope>CLEAVAGE OF INITIATOR METHIONINE</scope>
    <scope>IDENTIFICATION BY MASS SPECTROMETRY</scope>
    <source>
        <tissue>Prostatic carcinoma</tissue>
    </source>
</reference>
<reference key="20">
    <citation type="submission" date="2008-12" db="UniProtKB">
        <authorList>
            <person name="Lubec G."/>
            <person name="Vishwanath V."/>
            <person name="Chen W.-Q."/>
            <person name="Sun Y."/>
        </authorList>
    </citation>
    <scope>PROTEIN SEQUENCE OF 67-80; 87-107; 119-139; 146-186; 201-215; 235-248 AND 310-334</scope>
    <scope>IDENTIFICATION BY MASS SPECTROMETRY</scope>
    <source>
        <tissue>Brain</tissue>
        <tissue>Cajal-Retzius cell</tissue>
        <tissue>Fetal brain cortex</tissue>
    </source>
</reference>
<reference key="21">
    <citation type="journal article" date="1995" name="Electrophoresis">
        <title>The major protein expression profile and two-dimensional protein database of human heart.</title>
        <authorList>
            <person name="Kovalyov L.I."/>
            <person name="Shishkin S.S."/>
            <person name="Efimochkin A.S."/>
            <person name="Kovalyova M.A."/>
            <person name="Ershova E.S."/>
            <person name="Egorov T.A."/>
            <person name="Musalyamov A.K."/>
        </authorList>
    </citation>
    <scope>PROTEIN SEQUENCE OF 220-226 AND 242-246</scope>
    <source>
        <tissue>Heart</tissue>
    </source>
</reference>
<reference key="22">
    <citation type="journal article" date="1975" name="Hoppe-Seyler's Z. Physiol. Chem.">
        <title>The covalent structure of glyceraldehyde-phosphate dehydrogenase from human muscles. Isolation and amino acid sequences of peptides from tryptic digest.</title>
        <authorList>
            <person name="Nowak K."/>
            <person name="Kuczek M."/>
            <person name="Ostropolska L."/>
            <person name="Malarska A."/>
            <person name="Wolny M."/>
            <person name="Branowski T."/>
        </authorList>
    </citation>
    <scope>PARTIAL PROTEIN SEQUENCE</scope>
    <source>
        <tissue>Muscle</tissue>
    </source>
</reference>
<reference key="23">
    <citation type="journal article" date="2002" name="J. Biol. Chem.">
        <title>Glyceraldehyde-3-phosphate dehydrogenase is phosphorylated by protein kinase Ciota /lambda and plays a role in microtubule dynamics in the early secretory pathway.</title>
        <authorList>
            <person name="Tisdale E.J."/>
        </authorList>
    </citation>
    <scope>FUNCTION</scope>
    <scope>INTERACTION WITH PRKCI</scope>
</reference>
<reference key="24">
    <citation type="journal article" date="2003" name="Biochim. Biophys. Acta">
        <title>Subcellular localization of human glyceraldehyde-3-phosphate dehydrogenase is independent of its glycolytic function.</title>
        <authorList>
            <person name="Mazzola J.L."/>
            <person name="Sirover M.A."/>
        </authorList>
    </citation>
    <scope>SUBCELLULAR LOCATION</scope>
</reference>
<reference key="25">
    <citation type="journal article" date="2003" name="Nature">
        <title>Proteomic characterization of the human centrosome by protein correlation profiling.</title>
        <authorList>
            <person name="Andersen J.S."/>
            <person name="Wilkinson C.J."/>
            <person name="Mayor T."/>
            <person name="Mortensen P."/>
            <person name="Nigg E.A."/>
            <person name="Mann M."/>
        </authorList>
    </citation>
    <scope>IDENTIFICATION BY MASS SPECTROMETRY</scope>
    <source>
        <tissue>Lymphoblast</tissue>
    </source>
</reference>
<reference key="26">
    <citation type="journal article" date="2004" name="Cell">
        <title>Noncanonical function of glutamyl-prolyl-tRNA synthetase: gene-specific silencing of translation.</title>
        <authorList>
            <person name="Sampath P."/>
            <person name="Mazumder B."/>
            <person name="Seshadri V."/>
            <person name="Gerber C.A."/>
            <person name="Chavatte L."/>
            <person name="Kinter M."/>
            <person name="Ting S.M."/>
            <person name="Dignam J.D."/>
            <person name="Kim S."/>
            <person name="Driscoll D.M."/>
            <person name="Fox P.L."/>
        </authorList>
    </citation>
    <scope>IDENTIFICATION IN THE GAIT COMPLEX</scope>
</reference>
<reference key="27">
    <citation type="journal article" date="2005" name="Biochemistry">
        <title>Oxidative stress-responsive intracellular regulation specific for the angiostatic form of human tryptophanyl-tRNA synthetase.</title>
        <authorList>
            <person name="Wakasugi K."/>
            <person name="Nakano T."/>
            <person name="Morishima I."/>
        </authorList>
    </citation>
    <scope>INTERACTION WITH WARS1</scope>
</reference>
<reference key="28">
    <citation type="journal article" date="2005" name="Nat. Biotechnol.">
        <title>Immunoaffinity profiling of tyrosine phosphorylation in cancer cells.</title>
        <authorList>
            <person name="Rush J."/>
            <person name="Moritz A."/>
            <person name="Lee K.A."/>
            <person name="Guo A."/>
            <person name="Goss V.L."/>
            <person name="Spek E.J."/>
            <person name="Zhang H."/>
            <person name="Zha X.-M."/>
            <person name="Polakiewicz R.D."/>
            <person name="Comb M.J."/>
        </authorList>
    </citation>
    <scope>PHOSPHORYLATION [LARGE SCALE ANALYSIS] AT TYR-42</scope>
    <scope>IDENTIFICATION BY MASS SPECTROMETRY [LARGE SCALE ANALYSIS]</scope>
</reference>
<reference key="29">
    <citation type="journal article" date="2006" name="Cell">
        <title>Global, in vivo, and site-specific phosphorylation dynamics in signaling networks.</title>
        <authorList>
            <person name="Olsen J.V."/>
            <person name="Blagoev B."/>
            <person name="Gnad F."/>
            <person name="Macek B."/>
            <person name="Kumar C."/>
            <person name="Mortensen P."/>
            <person name="Mann M."/>
        </authorList>
    </citation>
    <scope>PHOSPHORYLATION [LARGE SCALE ANALYSIS] AT SER-83</scope>
    <scope>IDENTIFICATION BY MASS SPECTROMETRY [LARGE SCALE ANALYSIS]</scope>
    <source>
        <tissue>Cervix carcinoma</tissue>
    </source>
</reference>
<reference key="30">
    <citation type="journal article" date="2006" name="Cell. Mol. Life Sci.">
        <title>The ubiquitin-specific protease USP25 interacts with three sarcomeric proteins.</title>
        <authorList>
            <person name="Bosch-Comas A."/>
            <person name="Lindsten K."/>
            <person name="Gonzalez-Duarte R."/>
            <person name="Masucci M.G."/>
            <person name="Marfany G."/>
        </authorList>
    </citation>
    <scope>INTERACTION WITH USP25</scope>
</reference>
<reference key="31">
    <citation type="journal article" date="2006" name="Proc. Natl. Acad. Sci. U.S.A.">
        <title>HERC5 is an IFN-induced HECT-type E3 protein ligase that mediates type I IFN-induced ISGylation of protein targets.</title>
        <authorList>
            <person name="Wong J.J."/>
            <person name="Pung Y.F."/>
            <person name="Sze N.S."/>
            <person name="Chin K.C."/>
        </authorList>
    </citation>
    <scope>ISGYLATION</scope>
</reference>
<reference key="32">
    <citation type="journal article" date="2008" name="J. Proteome Res.">
        <title>Strategy for comprehensive identification of post-translational modifications in cellular proteins, including low abundant modifications: application to glyceraldehyde-3-phosphate dehydrogenase.</title>
        <authorList>
            <person name="Seo J."/>
            <person name="Jeong J."/>
            <person name="Kim Y.M."/>
            <person name="Hwang N."/>
            <person name="Paek E."/>
            <person name="Lee K.-J."/>
        </authorList>
    </citation>
    <scope>PHOSPHORYLATION AT THR-75; SER-122; SER-148; THR-229; THR-237 AND SER-312</scope>
    <scope>DEAMIDATION AT ASN-9; ASN-64; ASN-70; ASN-149; ASN-155; ASN-225 AND ASN-316</scope>
    <scope>METHYLATION AT LYS-5; LYS-66; LYS-194; LYS-215; LYS-227; LYS-260; LYS-263 AND LYS-334</scope>
</reference>
<reference key="33">
    <citation type="journal article" date="2008" name="Proc. Natl. Acad. Sci. U.S.A.">
        <title>A quantitative atlas of mitotic phosphorylation.</title>
        <authorList>
            <person name="Dephoure N."/>
            <person name="Zhou C."/>
            <person name="Villen J."/>
            <person name="Beausoleil S.A."/>
            <person name="Bakalarski C.E."/>
            <person name="Elledge S.J."/>
            <person name="Gygi S.P."/>
        </authorList>
    </citation>
    <scope>PHOSPHORYLATION [LARGE SCALE ANALYSIS] AT SER-83; SER-151 AND THR-184</scope>
    <scope>IDENTIFICATION BY MASS SPECTROMETRY [LARGE SCALE ANALYSIS]</scope>
    <source>
        <tissue>Cervix carcinoma</tissue>
    </source>
</reference>
<reference key="34">
    <citation type="journal article" date="2009" name="Anal. Chem.">
        <title>Lys-N and trypsin cover complementary parts of the phosphoproteome in a refined SCX-based approach.</title>
        <authorList>
            <person name="Gauci S."/>
            <person name="Helbig A.O."/>
            <person name="Slijper M."/>
            <person name="Krijgsveld J."/>
            <person name="Heck A.J."/>
            <person name="Mohammed S."/>
        </authorList>
    </citation>
    <scope>IDENTIFICATION BY MASS SPECTROMETRY [LARGE SCALE ANALYSIS]</scope>
</reference>
<reference key="35">
    <citation type="journal article" date="2009" name="J. Biol. Chem.">
        <title>FKBP36 is an inherent multifunctional glyceraldehyde-3-phosphate dehydrogenase inhibitor.</title>
        <authorList>
            <person name="Jarczowski F."/>
            <person name="Jahreis G."/>
            <person name="Erdmann F."/>
            <person name="Schierhorn A."/>
            <person name="Fischer G."/>
            <person name="Edlich F."/>
        </authorList>
    </citation>
    <scope>INTERACTION WITH FKBP6</scope>
</reference>
<reference key="36">
    <citation type="journal article" date="2009" name="Sci. Signal.">
        <title>Quantitative phosphoproteomic analysis of T cell receptor signaling reveals system-wide modulation of protein-protein interactions.</title>
        <authorList>
            <person name="Mayya V."/>
            <person name="Lundgren D.H."/>
            <person name="Hwang S.-I."/>
            <person name="Rezaul K."/>
            <person name="Wu L."/>
            <person name="Eng J.K."/>
            <person name="Rodionov V."/>
            <person name="Han D.K."/>
        </authorList>
    </citation>
    <scope>PHOSPHORYLATION [LARGE SCALE ANALYSIS] AT THR-184; THR-211 AND SER-312</scope>
    <scope>IDENTIFICATION BY MASS SPECTROMETRY [LARGE SCALE ANALYSIS]</scope>
    <source>
        <tissue>Leukemic T-cell</tissue>
    </source>
</reference>
<reference key="37">
    <citation type="journal article" date="2009" name="Science">
        <title>Lysine acetylation targets protein complexes and co-regulates major cellular functions.</title>
        <authorList>
            <person name="Choudhary C."/>
            <person name="Kumar C."/>
            <person name="Gnad F."/>
            <person name="Nielsen M.L."/>
            <person name="Rehman M."/>
            <person name="Walther T.C."/>
            <person name="Olsen J.V."/>
            <person name="Mann M."/>
        </authorList>
    </citation>
    <scope>ACETYLATION [LARGE SCALE ANALYSIS] AT LYS-61; LYS-194; LYS-219; LYS-227 AND LYS-254</scope>
    <scope>IDENTIFICATION BY MASS SPECTROMETRY [LARGE SCALE ANALYSIS]</scope>
</reference>
<reference key="38">
    <citation type="journal article" date="2010" name="Bioorg. Khim.">
        <title>Haponin (eIF1AD) interacts with glyceraldehyde 3-phosphate dehydrogenase in the CHO-K1 cell line.</title>
        <authorList>
            <person name="Rakitina T.V."/>
            <person name="Bogatova O.V."/>
            <person name="Smirnova E.V."/>
            <person name="Pozdeev V.I."/>
            <person name="Kostanian I.A."/>
            <person name="Lipkin V.M."/>
        </authorList>
    </citation>
    <scope>INTERACTION WITH EIF1AD</scope>
</reference>
<reference key="39">
    <citation type="journal article" date="2010" name="Sci. Signal.">
        <title>Quantitative phosphoproteomics reveals widespread full phosphorylation site occupancy during mitosis.</title>
        <authorList>
            <person name="Olsen J.V."/>
            <person name="Vermeulen M."/>
            <person name="Santamaria A."/>
            <person name="Kumar C."/>
            <person name="Miller M.L."/>
            <person name="Jensen L.J."/>
            <person name="Gnad F."/>
            <person name="Cox J."/>
            <person name="Jensen T.S."/>
            <person name="Nigg E.A."/>
            <person name="Brunak S."/>
            <person name="Mann M."/>
        </authorList>
    </citation>
    <scope>PHOSPHORYLATION [LARGE SCALE ANALYSIS] AT THR-75; SER-83 AND THR-184</scope>
    <scope>IDENTIFICATION BY MASS SPECTROMETRY [LARGE SCALE ANALYSIS]</scope>
    <source>
        <tissue>Cervix carcinoma</tissue>
    </source>
</reference>
<reference key="40">
    <citation type="journal article" date="2011" name="BMC Syst. Biol.">
        <title>Initial characterization of the human central proteome.</title>
        <authorList>
            <person name="Burkard T.R."/>
            <person name="Planyavsky M."/>
            <person name="Kaupe I."/>
            <person name="Breitwieser F.P."/>
            <person name="Buerckstuemmer T."/>
            <person name="Bennett K.L."/>
            <person name="Superti-Furga G."/>
            <person name="Colinge J."/>
        </authorList>
    </citation>
    <scope>IDENTIFICATION BY MASS SPECTROMETRY [LARGE SCALE ANALYSIS]</scope>
</reference>
<reference key="41">
    <citation type="journal article" date="2011" name="Mol. Cell. Proteomics">
        <title>The first identification of lysine malonylation substrates and its regulatory enzyme.</title>
        <authorList>
            <person name="Peng C."/>
            <person name="Lu Z."/>
            <person name="Xie Z."/>
            <person name="Cheng Z."/>
            <person name="Chen Y."/>
            <person name="Tan M."/>
            <person name="Luo H."/>
            <person name="Zhang Y."/>
            <person name="He W."/>
            <person name="Yang K."/>
            <person name="Zwaans B.M."/>
            <person name="Tishkoff D."/>
            <person name="Ho L."/>
            <person name="Lombard D."/>
            <person name="He T.C."/>
            <person name="Dai J."/>
            <person name="Verdin E."/>
            <person name="Ye Y."/>
            <person name="Zhao Y."/>
        </authorList>
    </citation>
    <scope>MALONYLATION AT LYS-194 AND LYS-215</scope>
</reference>
<reference key="42">
    <citation type="journal article" date="2011" name="Sci. Signal.">
        <title>System-wide temporal characterization of the proteome and phosphoproteome of human embryonic stem cell differentiation.</title>
        <authorList>
            <person name="Rigbolt K.T."/>
            <person name="Prokhorova T.A."/>
            <person name="Akimov V."/>
            <person name="Henningsen J."/>
            <person name="Johansen P.T."/>
            <person name="Kratchmarova I."/>
            <person name="Kassem M."/>
            <person name="Mann M."/>
            <person name="Olsen J.V."/>
            <person name="Blagoev B."/>
        </authorList>
    </citation>
    <scope>PHOSPHORYLATION [LARGE SCALE ANALYSIS] AT SER-83</scope>
    <scope>IDENTIFICATION BY MASS SPECTROMETRY [LARGE SCALE ANALYSIS]</scope>
</reference>
<reference key="43">
    <citation type="journal article" date="2012" name="J. Proteome Res.">
        <title>Resveratrol-induced changes of the human adipocyte secretion profile.</title>
        <authorList>
            <person name="Rosenow A."/>
            <person name="Noben J.P."/>
            <person name="Jocken J."/>
            <person name="Kallendrusch S."/>
            <person name="Fischer-Posovszky P."/>
            <person name="Mariman E.C."/>
            <person name="Renes J."/>
        </authorList>
    </citation>
    <scope>IDENTIFICATION BY MASS SPECTROMETRY [LARGE SCALE ANALYSIS]</scope>
</reference>
<reference key="44">
    <citation type="journal article" date="2012" name="Mol. Cell">
        <title>Protection of extraribosomal RPL13a by GAPDH and dysregulation by S-nitrosylation.</title>
        <authorList>
            <person name="Jia J."/>
            <person name="Arif A."/>
            <person name="Willard B."/>
            <person name="Smith J.D."/>
            <person name="Stuehr D.J."/>
            <person name="Hazen S.L."/>
            <person name="Fox P.L."/>
        </authorList>
    </citation>
    <scope>INTERACTION WITH RPL13A</scope>
    <scope>S-NITROSYLATION AT CYS-247</scope>
</reference>
<reference key="45">
    <citation type="journal article" date="2012" name="Mol. Cell. Biol.">
        <title>Heterotrimeric GAIT complex drives transcript-selective translation inhibition in murine macrophages.</title>
        <authorList>
            <person name="Arif A."/>
            <person name="Chatterjee P."/>
            <person name="Moodt R.A."/>
            <person name="Fox P.L."/>
        </authorList>
    </citation>
    <scope>FUNCTION</scope>
    <scope>RECONSTITUTION OF THE GAIT COMPLEX</scope>
</reference>
<reference key="46">
    <citation type="journal article" date="2012" name="Proc. Natl. Acad. Sci. U.S.A.">
        <title>N-terminal acetylome analyses and functional insights of the N-terminal acetyltransferase NatB.</title>
        <authorList>
            <person name="Van Damme P."/>
            <person name="Lasa M."/>
            <person name="Polevoda B."/>
            <person name="Gazquez C."/>
            <person name="Elosegui-Artola A."/>
            <person name="Kim D.S."/>
            <person name="De Juan-Pardo E."/>
            <person name="Demeyer K."/>
            <person name="Hole K."/>
            <person name="Larrea E."/>
            <person name="Timmerman E."/>
            <person name="Prieto J."/>
            <person name="Arnesen T."/>
            <person name="Sherman F."/>
            <person name="Gevaert K."/>
            <person name="Aldabe R."/>
        </authorList>
    </citation>
    <scope>IDENTIFICATION BY MASS SPECTROMETRY [LARGE SCALE ANALYSIS]</scope>
</reference>
<reference key="47">
    <citation type="journal article" date="2013" name="Cell Host Microbe">
        <title>NleB, a bacterial effector with glycosyltransferase activity, targets GAPDH function to inhibit NF-kappaB activation.</title>
        <authorList>
            <person name="Gao X."/>
            <person name="Wang X."/>
            <person name="Pham T.H."/>
            <person name="Feuerbacher L.A."/>
            <person name="Lubos M.L."/>
            <person name="Huang M."/>
            <person name="Olsen R."/>
            <person name="Mushegian A."/>
            <person name="Slawson C."/>
            <person name="Hardwidge P.R."/>
        </authorList>
    </citation>
    <scope>FUNCTION</scope>
    <scope>GLYCOSYLATION (MICROBIAL INFECTION)</scope>
    <scope>INTERACTION WITH TRAF2</scope>
    <scope>MUTAGENESIS OF CYS-152; THR-211; THR-229; SER-241; THR-246 AND THR-277</scope>
</reference>
<reference key="48">
    <citation type="journal article" date="2013" name="J. Proteome Res.">
        <title>Toward a comprehensive characterization of a human cancer cell phosphoproteome.</title>
        <authorList>
            <person name="Zhou H."/>
            <person name="Di Palma S."/>
            <person name="Preisinger C."/>
            <person name="Peng M."/>
            <person name="Polat A.N."/>
            <person name="Heck A.J."/>
            <person name="Mohammed S."/>
        </authorList>
    </citation>
    <scope>PHOSPHORYLATION [LARGE SCALE ANALYSIS] AT SER-83; SER-151; THR-153; THR-229 AND SER-333</scope>
    <scope>IDENTIFICATION BY MASS SPECTROMETRY [LARGE SCALE ANALYSIS]</scope>
    <source>
        <tissue>Cervix carcinoma</tissue>
        <tissue>Erythroleukemia</tissue>
    </source>
</reference>
<reference key="49">
    <citation type="journal article" date="2014" name="Cell">
        <title>Target-selective protein S-nitrosylation by sequence motif recognition.</title>
        <authorList>
            <person name="Jia J."/>
            <person name="Arif A."/>
            <person name="Terenzi F."/>
            <person name="Willard B."/>
            <person name="Plow E.F."/>
            <person name="Hazen S.L."/>
            <person name="Fox P.L."/>
        </authorList>
    </citation>
    <scope>S-NITROSYLATION AT CYS-247</scope>
    <scope>MUTAGENESIS OF LEU-245 AND GLU-250</scope>
    <scope>DOMAIN</scope>
</reference>
<reference key="50">
    <citation type="journal article" date="2014" name="J. Biol. Chem.">
        <title>Oxidation of an exposed methionine instigates the aggregation of glyceraldehyde-3-phosphate dehydrogenase.</title>
        <authorList>
            <person name="Samson A.L."/>
            <person name="Knaupp A.S."/>
            <person name="Kass I."/>
            <person name="Kleifeld O."/>
            <person name="Marijanovic E.M."/>
            <person name="Hughes V.A."/>
            <person name="Lupton C.J."/>
            <person name="Buckle A.M."/>
            <person name="Bottomley S.P."/>
            <person name="Medcalf R.L."/>
        </authorList>
    </citation>
    <scope>MECHANISM OF FREE RADICAL-INDUCED AGGREGATION</scope>
    <scope>ACTIVE SITE</scope>
    <scope>OXIDATION AT MET-46</scope>
    <scope>MUTAGENESIS OF MET-46; MET-105; CYS-152; CYS-156; TRP-196; CYS-247 AND TYR-320</scope>
</reference>
<reference key="51">
    <citation type="journal article" date="2014" name="J. Proteomics">
        <title>An enzyme assisted RP-RPLC approach for in-depth analysis of human liver phosphoproteome.</title>
        <authorList>
            <person name="Bian Y."/>
            <person name="Song C."/>
            <person name="Cheng K."/>
            <person name="Dong M."/>
            <person name="Wang F."/>
            <person name="Huang J."/>
            <person name="Sun D."/>
            <person name="Wang L."/>
            <person name="Ye M."/>
            <person name="Zou H."/>
        </authorList>
    </citation>
    <scope>PHOSPHORYLATION [LARGE SCALE ANALYSIS] AT THR-177; THR-182; THR-184 AND SER-241</scope>
    <scope>IDENTIFICATION BY MASS SPECTROMETRY [LARGE SCALE ANALYSIS]</scope>
    <source>
        <tissue>Liver</tissue>
    </source>
</reference>
<reference key="52">
    <citation type="journal article" date="2015" name="Proteomics">
        <title>N-terminome analysis of the human mitochondrial proteome.</title>
        <authorList>
            <person name="Vaca Jacome A.S."/>
            <person name="Rabilloud T."/>
            <person name="Schaeffer-Reiss C."/>
            <person name="Rompais M."/>
            <person name="Ayoub D."/>
            <person name="Lane L."/>
            <person name="Bairoch A."/>
            <person name="Van Dorsselaer A."/>
            <person name="Carapito C."/>
        </authorList>
    </citation>
    <scope>IDENTIFICATION BY MASS SPECTROMETRY [LARGE SCALE ANALYSIS]</scope>
</reference>
<reference key="53">
    <citation type="journal article" date="2016" name="J. Biol. Chem.">
        <title>Citrobacter rodentium NleB protein inhibits tumor necrosis factor (TNF) receptor-associated factor 3 (TRAF3) ubiquitination to reduce host type I interferon production.</title>
        <authorList>
            <person name="Gao X."/>
            <person name="Pham T.H."/>
            <person name="Feuerbacher L.A."/>
            <person name="Chen K."/>
            <person name="Hays M.P."/>
            <person name="Singh G."/>
            <person name="Rueter C."/>
            <person name="Hurtado-Guerrero R."/>
            <person name="Hardwidge P.R."/>
        </authorList>
    </citation>
    <scope>FUNCTION</scope>
    <scope>GLYCOSYLATION (MICROBIAL INFECTION)</scope>
    <scope>INTERACTION WITH TRAF2</scope>
    <scope>MUTAGENESIS OF CYS-152</scope>
</reference>
<reference key="54">
    <citation type="journal article" date="2017" name="J. Biol. Chem.">
        <title>NleB/SseK effectors from Citrobacter rodentium, Escherichia coli, and Salmonella enterica display distinct differences in host substrate specificity.</title>
        <authorList>
            <person name="El Qaidi S."/>
            <person name="Chen K."/>
            <person name="Halim A."/>
            <person name="Siukstaite L."/>
            <person name="Rueter C."/>
            <person name="Hurtado-Guerrero R."/>
            <person name="Clausen H."/>
            <person name="Hardwidge P.R."/>
        </authorList>
    </citation>
    <scope>GLYCOSYLATION AT ARG-197 AND ARG-200 (MICROBIAL INFECTION)</scope>
</reference>
<reference key="55">
    <citation type="journal article" date="2017" name="Nat. Struct. Mol. Biol.">
        <title>Site-specific mapping of the human SUMO proteome reveals co-modification with phosphorylation.</title>
        <authorList>
            <person name="Hendriks I.A."/>
            <person name="Lyon D."/>
            <person name="Young C."/>
            <person name="Jensen L.J."/>
            <person name="Vertegaal A.C."/>
            <person name="Nielsen M.L."/>
        </authorList>
    </citation>
    <scope>SUMOYLATION [LARGE SCALE ANALYSIS] AT LYS-186</scope>
    <scope>IDENTIFICATION BY MASS SPECTROMETRY [LARGE SCALE ANALYSIS]</scope>
</reference>
<reference key="56">
    <citation type="journal article" date="1976" name="J. Mol. Biol.">
        <title>Twinning in crystals of human skeletal muscle D-glyceraldehyde-3-phosphate dehydrogenase.</title>
        <authorList>
            <person name="Mercer W.D."/>
            <person name="Winn S.I."/>
            <person name="Watson H.C."/>
        </authorList>
    </citation>
    <scope>X-RAY CRYSTALLOGRAPHY (3.5 ANGSTROMS)</scope>
</reference>
<reference key="57">
    <citation type="journal article" date="2005" name="Acta Crystallogr. D">
        <title>Structural analysis of human liver glyceraldehyde-3-phosphate dehydrogenase.</title>
        <authorList>
            <person name="Ismail S.A."/>
            <person name="Park H.W."/>
        </authorList>
    </citation>
    <scope>X-RAY CRYSTALLOGRAPHY (2.5 ANGSTROMS) IN COMPLEX WITH NAD</scope>
    <scope>SUBUNIT</scope>
</reference>
<reference key="58">
    <citation type="journal article" date="2006" name="Acta Crystallogr. D">
        <title>High-resolution structure of human D-glyceraldehyde-3-phosphate dehydrogenase.</title>
        <authorList>
            <person name="Jenkins J.L."/>
            <person name="Tanner J.J."/>
        </authorList>
    </citation>
    <scope>X-RAY CRYSTALLOGRAPHY (1.75 ANGSTROMS) IN COMPLEX WITH NAD</scope>
    <scope>SUBUNIT</scope>
</reference>
<comment type="function">
    <text evidence="1 6 19 20 23 25">Has both glyceraldehyde-3-phosphate dehydrogenase and nitrosylase activities, thereby playing a role in glycolysis and nuclear functions, respectively (PubMed:11724794, PubMed:3170585). Glyceraldehyde-3-phosphate dehydrogenase is a key enzyme in glycolysis that catalyzes the first step of the pathway by converting D-glyceraldehyde 3-phosphate (G3P) into 3-phospho-D-glyceroyl phosphate (PubMed:11724794, PubMed:3170585). Modulates the organization and assembly of the cytoskeleton (By similarity). Facilitates the CHP1-dependent microtubule and membrane associations through its ability to stimulate the binding of CHP1 to microtubules (By similarity). Component of the GAIT (gamma interferon-activated inhibitor of translation) complex which mediates interferon-gamma-induced transcript-selective translation inhibition in inflammation processes (PubMed:23071094). Upon interferon-gamma treatment assembles into the GAIT complex which binds to stem loop-containing GAIT elements in the 3'-UTR of diverse inflammatory mRNAs (such as ceruplasmin) and suppresses their translation (PubMed:23071094). Also plays a role in innate immunity by promoting TNF-induced NF-kappa-B activation and type I interferon production, via interaction with TRAF2 and TRAF3, respectively (PubMed:23332158, PubMed:27387501). Participates in nuclear events including transcription, RNA transport, DNA replication and apoptosis (By similarity). Nuclear functions are probably due to the nitrosylase activity that mediates cysteine S-nitrosylation of nuclear target proteins such as SIRT1, HDAC2 and PRKDC (By similarity).</text>
</comment>
<comment type="catalytic activity">
    <reaction evidence="5 25">
        <text>D-glyceraldehyde 3-phosphate + phosphate + NAD(+) = (2R)-3-phospho-glyceroyl phosphate + NADH + H(+)</text>
        <dbReference type="Rhea" id="RHEA:10300"/>
        <dbReference type="ChEBI" id="CHEBI:15378"/>
        <dbReference type="ChEBI" id="CHEBI:43474"/>
        <dbReference type="ChEBI" id="CHEBI:57540"/>
        <dbReference type="ChEBI" id="CHEBI:57604"/>
        <dbReference type="ChEBI" id="CHEBI:57945"/>
        <dbReference type="ChEBI" id="CHEBI:59776"/>
        <dbReference type="EC" id="1.2.1.12"/>
    </reaction>
</comment>
<comment type="catalytic activity">
    <reaction evidence="1">
        <text>S-nitroso-L-cysteinyl-[GAPDH] + L-cysteinyl-[protein] = L-cysteinyl-[GAPDH] + S-nitroso-L-cysteinyl-[protein]</text>
        <dbReference type="Rhea" id="RHEA:66684"/>
        <dbReference type="Rhea" id="RHEA-COMP:10131"/>
        <dbReference type="Rhea" id="RHEA-COMP:17089"/>
        <dbReference type="Rhea" id="RHEA-COMP:17090"/>
        <dbReference type="Rhea" id="RHEA-COMP:17091"/>
        <dbReference type="ChEBI" id="CHEBI:29950"/>
        <dbReference type="ChEBI" id="CHEBI:149494"/>
    </reaction>
    <physiologicalReaction direction="left-to-right" evidence="1">
        <dbReference type="Rhea" id="RHEA:66685"/>
    </physiologicalReaction>
</comment>
<comment type="activity regulation">
    <text evidence="1">Glyceraldehyde-3-phosphate dehydrogenase activity is inhibited by fumarate, via the formation of S-(2-succinyl)cysteine residues.</text>
</comment>
<comment type="pathway">
    <text>Carbohydrate degradation; glycolysis; pyruvate from D-glyceraldehyde 3-phosphate: step 1/5.</text>
</comment>
<comment type="subunit">
    <text evidence="1 2 6 9 10 11 12 13 15 16 18 20 23">Homotetramer (PubMed:16239728, PubMed:16510976). Interacts with TPPP; the interaction is direct (By similarity). Interacts (when S-nitrosylated) with SIAH1; leading to nuclear translocation (By similarity). Interacts with RILPL1/GOSPEL, leading to prevent the interaction between GAPDH and SIAH1 and prevent nuclear translocation (By similarity). Interacts with CHP1; the interaction increases the binding of CHP1 with microtubules (By similarity). Associates with microtubules (By similarity). Interacts with EIF1AD, USP25, PRKCI and WARS1 (PubMed:11724794, PubMed:15628863, PubMed:16501887, PubMed:20644585). Interacts with phosphorylated RPL13A; inhibited by oxidatively-modified low-densitity lipoprotein (LDL(ox)) (PubMed:22771119). Component of the GAIT complex (PubMed:15479637). Interacts with FKBP6; leading to inhibit GAPDH catalytic activity (PubMed:19001379). Interacts with TRAF2, promoting TRAF2 ubiquitination (PubMed:23332158). Interacts with TRAF3, promoting TRAF3 ubiquitination (PubMed:27387501).</text>
</comment>
<comment type="interaction">
    <interactant intactId="EBI-354056">
        <id>P04406</id>
    </interactant>
    <interactant intactId="EBI-10173507">
        <id>Q6UY14-3</id>
        <label>ADAMTSL4</label>
    </interactant>
    <organismsDiffer>false</organismsDiffer>
    <experiments>3</experiments>
</comment>
<comment type="interaction">
    <interactant intactId="EBI-354056">
        <id>P04406</id>
    </interactant>
    <interactant intactId="EBI-3916527">
        <id>Q9UIJ7</id>
        <label>AK3</label>
    </interactant>
    <organismsDiffer>false</organismsDiffer>
    <experiments>3</experiments>
</comment>
<comment type="interaction">
    <interactant intactId="EBI-354056">
        <id>P04406</id>
    </interactant>
    <interactant intactId="EBI-77613">
        <id>P05067</id>
        <label>APP</label>
    </interactant>
    <organismsDiffer>false</organismsDiffer>
    <experiments>3</experiments>
</comment>
<comment type="interaction">
    <interactant intactId="EBI-354056">
        <id>P04406</id>
    </interactant>
    <interactant intactId="EBI-1383687">
        <id>Q9UQM7</id>
        <label>CAMK2A</label>
    </interactant>
    <organismsDiffer>false</organismsDiffer>
    <experiments>3</experiments>
</comment>
<comment type="interaction">
    <interactant intactId="EBI-354056">
        <id>P04406</id>
    </interactant>
    <interactant intactId="EBI-473101">
        <id>Q14194</id>
        <label>CRMP1</label>
    </interactant>
    <organismsDiffer>false</organismsDiffer>
    <experiments>3</experiments>
</comment>
<comment type="interaction">
    <interactant intactId="EBI-354056">
        <id>P04406</id>
    </interactant>
    <interactant intactId="EBI-491549">
        <id>P35222</id>
        <label>CTNNB1</label>
    </interactant>
    <organismsDiffer>false</organismsDiffer>
    <experiments>3</experiments>
</comment>
<comment type="interaction">
    <interactant intactId="EBI-354056">
        <id>P04406</id>
    </interactant>
    <interactant intactId="EBI-19157435">
        <id>Q9BPW9-4</id>
        <label>DHRS9</label>
    </interactant>
    <organismsDiffer>false</organismsDiffer>
    <experiments>3</experiments>
</comment>
<comment type="interaction">
    <interactant intactId="EBI-354056">
        <id>P04406</id>
    </interactant>
    <interactant intactId="EBI-297353">
        <id>P00533</id>
        <label>EGFR</label>
    </interactant>
    <organismsDiffer>false</organismsDiffer>
    <experiments>7</experiments>
</comment>
<comment type="interaction">
    <interactant intactId="EBI-354056">
        <id>P04406</id>
    </interactant>
    <interactant intactId="EBI-949824">
        <id>O00471</id>
        <label>EXOC5</label>
    </interactant>
    <organismsDiffer>false</organismsDiffer>
    <experiments>3</experiments>
</comment>
<comment type="interaction">
    <interactant intactId="EBI-354056">
        <id>P04406</id>
    </interactant>
    <interactant intactId="EBI-744771">
        <id>O75344</id>
        <label>FKBP6</label>
    </interactant>
    <organismsDiffer>false</organismsDiffer>
    <experiments>3</experiments>
</comment>
<comment type="interaction">
    <interactant intactId="EBI-354056">
        <id>P04406</id>
    </interactant>
    <interactant intactId="EBI-515315">
        <id>P06241</id>
        <label>FYN</label>
    </interactant>
    <organismsDiffer>false</organismsDiffer>
    <experiments>3</experiments>
</comment>
<comment type="interaction">
    <interactant intactId="EBI-354056">
        <id>P04406</id>
    </interactant>
    <interactant intactId="EBI-354056">
        <id>P04406</id>
        <label>GAPDH</label>
    </interactant>
    <organismsDiffer>false</organismsDiffer>
    <experiments>2</experiments>
</comment>
<comment type="interaction">
    <interactant intactId="EBI-354056">
        <id>P04406</id>
    </interactant>
    <interactant intactId="EBI-1057431">
        <id>O14556</id>
        <label>GAPDHS</label>
    </interactant>
    <organismsDiffer>false</organismsDiffer>
    <experiments>3</experiments>
</comment>
<comment type="interaction">
    <interactant intactId="EBI-354056">
        <id>P04406</id>
    </interactant>
    <interactant intactId="EBI-745707">
        <id>Q8NEA9</id>
        <label>GMCL2</label>
    </interactant>
    <organismsDiffer>false</organismsDiffer>
    <experiments>3</experiments>
</comment>
<comment type="interaction">
    <interactant intactId="EBI-354056">
        <id>P04406</id>
    </interactant>
    <interactant intactId="EBI-466029">
        <id>P42858</id>
        <label>HTT</label>
    </interactant>
    <organismsDiffer>false</organismsDiffer>
    <experiments>7</experiments>
</comment>
<comment type="interaction">
    <interactant intactId="EBI-354056">
        <id>P04406</id>
    </interactant>
    <interactant intactId="EBI-20795332">
        <id>Q92993-2</id>
        <label>KAT5</label>
    </interactant>
    <organismsDiffer>false</organismsDiffer>
    <experiments>3</experiments>
</comment>
<comment type="interaction">
    <interactant intactId="EBI-354056">
        <id>P04406</id>
    </interactant>
    <interactant intactId="EBI-722805">
        <id>P42695</id>
        <label>NCAPD3</label>
    </interactant>
    <organismsDiffer>false</organismsDiffer>
    <experiments>2</experiments>
</comment>
<comment type="interaction">
    <interactant intactId="EBI-354056">
        <id>P04406</id>
    </interactant>
    <interactant intactId="EBI-6662224">
        <id>P35228</id>
        <label>NOS2</label>
    </interactant>
    <organismsDiffer>false</organismsDiffer>
    <experiments>8</experiments>
</comment>
<comment type="interaction">
    <interactant intactId="EBI-354056">
        <id>P04406</id>
    </interactant>
    <interactant intactId="EBI-358311">
        <id>P12004</id>
        <label>PCNA</label>
    </interactant>
    <organismsDiffer>false</organismsDiffer>
    <experiments>3</experiments>
</comment>
<comment type="interaction">
    <interactant intactId="EBI-354056">
        <id>P04406</id>
    </interactant>
    <interactant intactId="EBI-709599">
        <id>P00558</id>
        <label>PGK1</label>
    </interactant>
    <organismsDiffer>false</organismsDiffer>
    <experiments>2</experiments>
</comment>
<comment type="interaction">
    <interactant intactId="EBI-354056">
        <id>P04406</id>
    </interactant>
    <interactant intactId="EBI-1049962">
        <id>P48147</id>
        <label>PREP</label>
    </interactant>
    <organismsDiffer>false</organismsDiffer>
    <experiments>5</experiments>
</comment>
<comment type="interaction">
    <interactant intactId="EBI-354056">
        <id>P04406</id>
    </interactant>
    <interactant intactId="EBI-476586">
        <id>P17612</id>
        <label>PRKACA</label>
    </interactant>
    <organismsDiffer>false</organismsDiffer>
    <experiments>3</experiments>
</comment>
<comment type="interaction">
    <interactant intactId="EBI-354056">
        <id>P04406</id>
    </interactant>
    <interactant intactId="EBI-743880">
        <id>Q8WUY3</id>
        <label>PRUNE2</label>
    </interactant>
    <organismsDiffer>false</organismsDiffer>
    <experiments>3</experiments>
</comment>
<comment type="interaction">
    <interactant intactId="EBI-354056">
        <id>P04406</id>
    </interactant>
    <interactant intactId="EBI-11529177">
        <id>Q9UHX1-2</id>
        <label>PUF60</label>
    </interactant>
    <organismsDiffer>false</organismsDiffer>
    <experiments>3</experiments>
</comment>
<comment type="interaction">
    <interactant intactId="EBI-354056">
        <id>P04406</id>
    </interactant>
    <interactant intactId="EBI-621404">
        <id>P15927</id>
        <label>RPA2</label>
    </interactant>
    <organismsDiffer>false</organismsDiffer>
    <experiments>2</experiments>
</comment>
<comment type="interaction">
    <interactant intactId="EBI-354056">
        <id>P04406</id>
    </interactant>
    <interactant intactId="EBI-355281">
        <id>P05109</id>
        <label>S100A8</label>
    </interactant>
    <organismsDiffer>false</organismsDiffer>
    <experiments>6</experiments>
</comment>
<comment type="interaction">
    <interactant intactId="EBI-354056">
        <id>P04406</id>
    </interactant>
    <interactant intactId="EBI-7225508">
        <id>Q96GZ6</id>
        <label>SLC41A3</label>
    </interactant>
    <organismsDiffer>false</organismsDiffer>
    <experiments>3</experiments>
</comment>
<comment type="interaction">
    <interactant intactId="EBI-354056">
        <id>P04406</id>
    </interactant>
    <interactant intactId="EBI-990792">
        <id>P00441</id>
        <label>SOD1</label>
    </interactant>
    <organismsDiffer>false</organismsDiffer>
    <experiments>3</experiments>
</comment>
<comment type="interaction">
    <interactant intactId="EBI-354056">
        <id>P04406</id>
    </interactant>
    <interactant intactId="EBI-717399">
        <id>Q9BSI4</id>
        <label>TINF2</label>
    </interactant>
    <organismsDiffer>false</organismsDiffer>
    <experiments>2</experiments>
</comment>
<comment type="interaction">
    <interactant intactId="EBI-354056">
        <id>P04406</id>
    </interactant>
    <interactant intactId="EBI-594644">
        <id>P10599</id>
        <label>TXN</label>
    </interactant>
    <organismsDiffer>false</organismsDiffer>
    <experiments>3</experiments>
</comment>
<comment type="subcellular location">
    <subcellularLocation>
        <location evidence="8">Cytoplasm</location>
        <location evidence="8">Cytosol</location>
    </subcellularLocation>
    <subcellularLocation>
        <location evidence="1">Nucleus</location>
    </subcellularLocation>
    <subcellularLocation>
        <location evidence="8">Cytoplasm</location>
        <location evidence="8">Perinuclear region</location>
    </subcellularLocation>
    <subcellularLocation>
        <location evidence="8">Membrane</location>
    </subcellularLocation>
    <subcellularLocation>
        <location evidence="1">Cytoplasm</location>
        <location evidence="1">Cytoskeleton</location>
    </subcellularLocation>
    <text evidence="1 8">Translocates to the nucleus following S-nitrosylation and interaction with SIAH1, which contains a nuclear localization signal (By similarity). Postnuclear and Perinuclear regions (PubMed:12829261).</text>
</comment>
<comment type="alternative products">
    <event type="alternative splicing"/>
    <isoform>
        <id>P04406-1</id>
        <name>1</name>
        <sequence type="displayed"/>
    </isoform>
    <isoform>
        <id>P04406-2</id>
        <name>2</name>
        <sequence type="described" ref="VSP_047289"/>
    </isoform>
</comment>
<comment type="domain">
    <text evidence="35">The [IL]-x-C-x-x-[DE] motif is a proposed target motif for cysteine S-nitrosylation mediated by the iNOS-S100A8/A9 transnitrosylase complex.</text>
</comment>
<comment type="PTM">
    <text evidence="1 18 22">S-nitrosylation of Cys-152 leads to interaction with SIAH1, followed by translocation to the nucleus (By similarity). S-nitrosylation of Cys-247 is induced by interferon-gamma and LDL(ox) implicating the iNOS-S100A8/9 transnitrosylase complex and seems to prevent interaction with phosphorylated RPL13A and to interfere with GAIT complex activity (PubMed:22771119, PubMed:25417112).</text>
</comment>
<comment type="PTM">
    <text evidence="33">ISGylated.</text>
</comment>
<comment type="PTM">
    <text evidence="3">Sulfhydration at Cys-152 increases catalytic activity.</text>
</comment>
<comment type="PTM">
    <text evidence="34">Oxidative stress can promote the formation of high molecular weight disulfide-linked GAPDH aggregates, through a process called nucleocytoplasmic coagulation. Such aggregates can be observed in vivo in the affected tissues of patients with Alzheimer disease or alcoholic liver cirrhosis, or in cell cultures during necrosis. Oxidation at Met-46 may play a pivotal role in the formation of these insoluble structures. This modification has been detected in vitro following treatment with free radical donor (+/-)-(E)-4-ethyl-2-[(E)-hydroxyimino]-5-nitro-3-hexenamide. It has been proposed to destabilize nearby residues, increasing the likelihood of secondary oxidative damages, including oxidation of Tyr-45 and Met-105. This cascade of oxidations may augment GAPDH misfolding, leading to intermolecular disulfide cross-linking and aggregation.</text>
</comment>
<comment type="PTM">
    <text evidence="1">Succination of Cys-152 and Cys-247 by the Krebs cycle intermediate fumarate, which leads to S-(2-succinyl)cysteine residues, inhibits glyceraldehyde-3-phosphate dehydrogenase activity. Fumarate concentration as well as succination of cysteine residues in GAPDH is significantly increased in muscle of diabetic mammals. It was proposed that the S-(2-succinyl)cysteine chemical modification may be a useful biomarker of mitochondrial and oxidative stress in diabetes and that succination of GAPDH and other thiol proteins by fumarate may contribute to the metabolic changes underlying the development of diabetes complications.</text>
</comment>
<comment type="PTM">
    <text evidence="20 23 24">(Microbial infection) Glycosylated by C.rodentium protein NleB, enteropathogenic E.coli protein NleB1 and S.typhimurium protein Ssek1: arginine GlcNAcylation prevents the interaction with TRAF2 and TRAF3 (PubMed:23332158, PubMed:27387501, PubMed:28522607). This leads to reduced ubiquitination of TRAF2 and TRAF3, and subsequent inhibition of NF-kappa-B signaling and type I interferon production, respectively (PubMed:23332158, PubMed:27387501).</text>
</comment>
<comment type="similarity">
    <text evidence="30">Belongs to the glyceraldehyde-3-phosphate dehydrogenase family.</text>
</comment>
<comment type="online information" name="Wikipedia">
    <link uri="https://en.wikipedia.org/wiki/Glyceraldehyde_3-phosphate_dehydrogenase"/>
    <text>Glyceraldehyde 3-phosphate dehydrogenase entry</text>
</comment>
<evidence type="ECO:0000250" key="1">
    <source>
        <dbReference type="UniProtKB" id="P04797"/>
    </source>
</evidence>
<evidence type="ECO:0000250" key="2">
    <source>
        <dbReference type="UniProtKB" id="P10096"/>
    </source>
</evidence>
<evidence type="ECO:0000250" key="3">
    <source>
        <dbReference type="UniProtKB" id="P16858"/>
    </source>
</evidence>
<evidence type="ECO:0000250" key="4">
    <source>
        <dbReference type="UniProtKB" id="P22513"/>
    </source>
</evidence>
<evidence type="ECO:0000255" key="5">
    <source>
        <dbReference type="PROSITE-ProRule" id="PRU10009"/>
    </source>
</evidence>
<evidence type="ECO:0000269" key="6">
    <source>
    </source>
</evidence>
<evidence type="ECO:0000269" key="7">
    <source>
    </source>
</evidence>
<evidence type="ECO:0000269" key="8">
    <source>
    </source>
</evidence>
<evidence type="ECO:0000269" key="9">
    <source>
    </source>
</evidence>
<evidence type="ECO:0000269" key="10">
    <source>
    </source>
</evidence>
<evidence type="ECO:0000269" key="11">
    <source>
    </source>
</evidence>
<evidence type="ECO:0000269" key="12">
    <source>
    </source>
</evidence>
<evidence type="ECO:0000269" key="13">
    <source>
    </source>
</evidence>
<evidence type="ECO:0000269" key="14">
    <source>
    </source>
</evidence>
<evidence type="ECO:0000269" key="15">
    <source>
    </source>
</evidence>
<evidence type="ECO:0000269" key="16">
    <source>
    </source>
</evidence>
<evidence type="ECO:0000269" key="17">
    <source>
    </source>
</evidence>
<evidence type="ECO:0000269" key="18">
    <source>
    </source>
</evidence>
<evidence type="ECO:0000269" key="19">
    <source>
    </source>
</evidence>
<evidence type="ECO:0000269" key="20">
    <source>
    </source>
</evidence>
<evidence type="ECO:0000269" key="21">
    <source>
    </source>
</evidence>
<evidence type="ECO:0000269" key="22">
    <source>
    </source>
</evidence>
<evidence type="ECO:0000269" key="23">
    <source>
    </source>
</evidence>
<evidence type="ECO:0000269" key="24">
    <source>
    </source>
</evidence>
<evidence type="ECO:0000269" key="25">
    <source>
    </source>
</evidence>
<evidence type="ECO:0000269" key="26">
    <source ref="12"/>
</evidence>
<evidence type="ECO:0000269" key="27">
    <source ref="19"/>
</evidence>
<evidence type="ECO:0000303" key="28">
    <source>
    </source>
</evidence>
<evidence type="ECO:0000303" key="29">
    <source>
    </source>
</evidence>
<evidence type="ECO:0000305" key="30"/>
<evidence type="ECO:0000305" key="31">
    <source>
    </source>
</evidence>
<evidence type="ECO:0000305" key="32">
    <source>
    </source>
</evidence>
<evidence type="ECO:0000305" key="33">
    <source>
    </source>
</evidence>
<evidence type="ECO:0000305" key="34">
    <source>
    </source>
</evidence>
<evidence type="ECO:0000305" key="35">
    <source>
    </source>
</evidence>
<evidence type="ECO:0000312" key="36">
    <source>
        <dbReference type="HGNC" id="HGNC:4141"/>
    </source>
</evidence>
<evidence type="ECO:0007744" key="37">
    <source>
    </source>
</evidence>
<evidence type="ECO:0007744" key="38">
    <source>
    </source>
</evidence>
<evidence type="ECO:0007744" key="39">
    <source>
    </source>
</evidence>
<evidence type="ECO:0007744" key="40">
    <source>
    </source>
</evidence>
<evidence type="ECO:0007744" key="41">
    <source>
    </source>
</evidence>
<evidence type="ECO:0007744" key="42">
    <source>
    </source>
</evidence>
<evidence type="ECO:0007744" key="43">
    <source>
    </source>
</evidence>
<evidence type="ECO:0007744" key="44">
    <source>
    </source>
</evidence>
<evidence type="ECO:0007744" key="45">
    <source>
    </source>
</evidence>
<evidence type="ECO:0007744" key="46">
    <source>
    </source>
</evidence>
<evidence type="ECO:0007829" key="47">
    <source>
        <dbReference type="PDB" id="6YND"/>
    </source>
</evidence>
<gene>
    <name evidence="28 36" type="primary">GAPDH</name>
    <name evidence="29" type="synonym">GAPD</name>
    <name type="ORF">CDABP0047</name>
    <name type="ORF">OK/SW-cl.12</name>
</gene>
<protein>
    <recommendedName>
        <fullName evidence="29">Glyceraldehyde-3-phosphate dehydrogenase</fullName>
        <shortName evidence="28">GAPDH</shortName>
        <ecNumber evidence="25">1.2.1.12</ecNumber>
    </recommendedName>
    <alternativeName>
        <fullName evidence="30">Peptidyl-cysteine S-nitrosylase GAPDH</fullName>
        <ecNumber evidence="1">2.6.99.-</ecNumber>
    </alternativeName>
</protein>
<name>G3P_HUMAN</name>
<keyword id="KW-0002">3D-structure</keyword>
<keyword id="KW-0007">Acetylation</keyword>
<keyword id="KW-0013">ADP-ribosylation</keyword>
<keyword id="KW-0025">Alternative splicing</keyword>
<keyword id="KW-0053">Apoptosis</keyword>
<keyword id="KW-0963">Cytoplasm</keyword>
<keyword id="KW-0206">Cytoskeleton</keyword>
<keyword id="KW-0903">Direct protein sequencing</keyword>
<keyword id="KW-0324">Glycolysis</keyword>
<keyword id="KW-0325">Glycoprotein</keyword>
<keyword id="KW-0391">Immunity</keyword>
<keyword id="KW-0399">Innate immunity</keyword>
<keyword id="KW-1017">Isopeptide bond</keyword>
<keyword id="KW-0472">Membrane</keyword>
<keyword id="KW-0488">Methylation</keyword>
<keyword id="KW-0520">NAD</keyword>
<keyword id="KW-0539">Nucleus</keyword>
<keyword id="KW-0558">Oxidation</keyword>
<keyword id="KW-0560">Oxidoreductase</keyword>
<keyword id="KW-0597">Phosphoprotein</keyword>
<keyword id="KW-1267">Proteomics identification</keyword>
<keyword id="KW-1185">Reference proteome</keyword>
<keyword id="KW-0702">S-nitrosylation</keyword>
<keyword id="KW-0808">Transferase</keyword>
<keyword id="KW-0810">Translation regulation</keyword>
<keyword id="KW-0832">Ubl conjugation</keyword>
<organism>
    <name type="scientific">Homo sapiens</name>
    <name type="common">Human</name>
    <dbReference type="NCBI Taxonomy" id="9606"/>
    <lineage>
        <taxon>Eukaryota</taxon>
        <taxon>Metazoa</taxon>
        <taxon>Chordata</taxon>
        <taxon>Craniata</taxon>
        <taxon>Vertebrata</taxon>
        <taxon>Euteleostomi</taxon>
        <taxon>Mammalia</taxon>
        <taxon>Eutheria</taxon>
        <taxon>Euarchontoglires</taxon>
        <taxon>Primates</taxon>
        <taxon>Haplorrhini</taxon>
        <taxon>Catarrhini</taxon>
        <taxon>Hominidae</taxon>
        <taxon>Homo</taxon>
    </lineage>
</organism>
<feature type="initiator methionine" description="Removed" evidence="7 27">
    <location>
        <position position="1"/>
    </location>
</feature>
<feature type="chain" id="PRO_0000145486" description="Glyceraldehyde-3-phosphate dehydrogenase">
    <location>
        <begin position="2"/>
        <end position="335"/>
    </location>
</feature>
<feature type="region of interest" description="Interaction with WARS1" evidence="10">
    <location>
        <begin position="2"/>
        <end position="148"/>
    </location>
</feature>
<feature type="short sequence motif" description="[IL]-x-C-x-x-[DE] motif" evidence="35">
    <location>
        <begin position="245"/>
        <end position="250"/>
    </location>
</feature>
<feature type="active site" description="Nucleophile" evidence="21">
    <location>
        <position position="152"/>
    </location>
</feature>
<feature type="binding site" evidence="11 13">
    <location>
        <begin position="13"/>
        <end position="14"/>
    </location>
    <ligand>
        <name>NAD(+)</name>
        <dbReference type="ChEBI" id="CHEBI:57540"/>
    </ligand>
</feature>
<feature type="binding site" evidence="11 13">
    <location>
        <position position="35"/>
    </location>
    <ligand>
        <name>NAD(+)</name>
        <dbReference type="ChEBI" id="CHEBI:57540"/>
    </ligand>
</feature>
<feature type="binding site" evidence="11 13">
    <location>
        <position position="80"/>
    </location>
    <ligand>
        <name>NAD(+)</name>
        <dbReference type="ChEBI" id="CHEBI:57540"/>
    </ligand>
</feature>
<feature type="binding site" evidence="11 13">
    <location>
        <position position="122"/>
    </location>
    <ligand>
        <name>NAD(+)</name>
        <dbReference type="ChEBI" id="CHEBI:57540"/>
    </ligand>
</feature>
<feature type="binding site" evidence="4">
    <location>
        <begin position="151"/>
        <end position="153"/>
    </location>
    <ligand>
        <name>D-glyceraldehyde 3-phosphate</name>
        <dbReference type="ChEBI" id="CHEBI:59776"/>
    </ligand>
</feature>
<feature type="binding site" evidence="4">
    <location>
        <position position="182"/>
    </location>
    <ligand>
        <name>D-glyceraldehyde 3-phosphate</name>
        <dbReference type="ChEBI" id="CHEBI:59776"/>
    </ligand>
</feature>
<feature type="binding site" evidence="4">
    <location>
        <begin position="211"/>
        <end position="212"/>
    </location>
    <ligand>
        <name>D-glyceraldehyde 3-phosphate</name>
        <dbReference type="ChEBI" id="CHEBI:59776"/>
    </ligand>
</feature>
<feature type="binding site" evidence="4">
    <location>
        <position position="234"/>
    </location>
    <ligand>
        <name>D-glyceraldehyde 3-phosphate</name>
        <dbReference type="ChEBI" id="CHEBI:59776"/>
    </ligand>
</feature>
<feature type="binding site" evidence="11 13">
    <location>
        <position position="316"/>
    </location>
    <ligand>
        <name>NAD(+)</name>
        <dbReference type="ChEBI" id="CHEBI:57540"/>
    </ligand>
</feature>
<feature type="site" description="Activates thiol group during catalysis" evidence="31 32">
    <location>
        <position position="179"/>
    </location>
</feature>
<feature type="modified residue" description="N6,N6-dimethyllysine" evidence="14">
    <location>
        <position position="5"/>
    </location>
</feature>
<feature type="modified residue" description="Deamidated asparagine" evidence="14">
    <location>
        <position position="9"/>
    </location>
</feature>
<feature type="modified residue" description="Phosphotyrosine" evidence="37">
    <location>
        <position position="42"/>
    </location>
</feature>
<feature type="modified residue" description="Methionine sulfoxide; in vitro" evidence="34">
    <location>
        <position position="46"/>
    </location>
</feature>
<feature type="modified residue" description="N6-acetyllysine" evidence="40">
    <location>
        <position position="61"/>
    </location>
</feature>
<feature type="modified residue" description="Deamidated asparagine" evidence="14">
    <location>
        <position position="64"/>
    </location>
</feature>
<feature type="modified residue" description="N6,N6-dimethyllysine" evidence="14">
    <location>
        <position position="66"/>
    </location>
</feature>
<feature type="modified residue" description="Deamidated asparagine" evidence="14">
    <location>
        <position position="70"/>
    </location>
</feature>
<feature type="modified residue" description="Phosphothreonine" evidence="14 42">
    <location>
        <position position="75"/>
    </location>
</feature>
<feature type="modified residue" description="Phosphoserine" evidence="38 39 42 43 44">
    <location>
        <position position="83"/>
    </location>
</feature>
<feature type="modified residue" description="Phosphoserine" evidence="14">
    <location>
        <position position="122"/>
    </location>
</feature>
<feature type="modified residue" description="Phosphoserine" evidence="14">
    <location>
        <position position="148"/>
    </location>
</feature>
<feature type="modified residue" description="Deamidated asparagine" evidence="14">
    <location>
        <position position="149"/>
    </location>
</feature>
<feature type="modified residue" description="Phosphoserine" evidence="39 44">
    <location>
        <position position="151"/>
    </location>
</feature>
<feature type="modified residue" description="ADP-ribosylcysteine; by autocatalysis; in irreversibly inhibited form" evidence="1">
    <location>
        <position position="152"/>
    </location>
</feature>
<feature type="modified residue" description="Cysteine persulfide" evidence="3">
    <location>
        <position position="152"/>
    </location>
</feature>
<feature type="modified residue" description="S-(2-succinyl)cysteine" evidence="1">
    <location>
        <position position="152"/>
    </location>
</feature>
<feature type="modified residue" description="S-nitrosocysteine; in reversibly inhibited form" evidence="1">
    <location>
        <position position="152"/>
    </location>
</feature>
<feature type="modified residue" description="Phosphothreonine" evidence="44">
    <location>
        <position position="153"/>
    </location>
</feature>
<feature type="modified residue" description="Deamidated asparagine" evidence="14">
    <location>
        <position position="155"/>
    </location>
</feature>
<feature type="modified residue" description="Phosphothreonine" evidence="45">
    <location>
        <position position="177"/>
    </location>
</feature>
<feature type="modified residue" description="Phosphothreonine" evidence="45">
    <location>
        <position position="182"/>
    </location>
</feature>
<feature type="modified residue" description="Phosphothreonine" evidence="39 41 42 45">
    <location>
        <position position="184"/>
    </location>
</feature>
<feature type="modified residue" description="N6,N6-dimethyllysine; alternate" evidence="14">
    <location>
        <position position="194"/>
    </location>
</feature>
<feature type="modified residue" description="N6-acetyllysine; alternate" evidence="40">
    <location>
        <position position="194"/>
    </location>
</feature>
<feature type="modified residue" description="N6-malonyllysine; alternate" evidence="17">
    <location>
        <position position="194"/>
    </location>
</feature>
<feature type="modified residue" description="Phosphothreonine" evidence="41">
    <location>
        <position position="211"/>
    </location>
</feature>
<feature type="modified residue" description="N6,N6-dimethyllysine; alternate" evidence="14">
    <location>
        <position position="215"/>
    </location>
</feature>
<feature type="modified residue" description="N6-malonyllysine; alternate" evidence="17">
    <location>
        <position position="215"/>
    </location>
</feature>
<feature type="modified residue" description="N6-acetyllysine" evidence="40">
    <location>
        <position position="219"/>
    </location>
</feature>
<feature type="modified residue" description="Deamidated asparagine" evidence="14">
    <location>
        <position position="225"/>
    </location>
</feature>
<feature type="modified residue" description="N6,N6-dimethyllysine; alternate" evidence="14">
    <location>
        <position position="227"/>
    </location>
</feature>
<feature type="modified residue" description="N6-acetyllysine; alternate" evidence="40">
    <location>
        <position position="227"/>
    </location>
</feature>
<feature type="modified residue" description="Phosphothreonine" evidence="14 44">
    <location>
        <position position="229"/>
    </location>
</feature>
<feature type="modified residue" description="Phosphothreonine" evidence="14">
    <location>
        <position position="237"/>
    </location>
</feature>
<feature type="modified residue" description="Phosphoserine" evidence="45">
    <location>
        <position position="241"/>
    </location>
</feature>
<feature type="modified residue" description="S-(2-succinyl)cysteine" evidence="1">
    <location>
        <position position="247"/>
    </location>
</feature>
<feature type="modified residue" description="S-nitrosocysteine" evidence="18 22">
    <location>
        <position position="247"/>
    </location>
</feature>
<feature type="modified residue" description="N6-acetyllysine" evidence="40">
    <location>
        <position position="254"/>
    </location>
</feature>
<feature type="modified residue" description="N6,N6-dimethyllysine" evidence="14">
    <location>
        <position position="260"/>
    </location>
</feature>
<feature type="modified residue" description="N6,N6-dimethyllysine" evidence="14">
    <location>
        <position position="263"/>
    </location>
</feature>
<feature type="modified residue" description="Phosphoserine" evidence="14 41">
    <location>
        <position position="312"/>
    </location>
</feature>
<feature type="modified residue" description="Deamidated asparagine" evidence="14">
    <location>
        <position position="316"/>
    </location>
</feature>
<feature type="modified residue" description="Phosphoserine" evidence="44">
    <location>
        <position position="333"/>
    </location>
</feature>
<feature type="modified residue" description="N6,N6-dimethyllysine" evidence="14">
    <location>
        <position position="334"/>
    </location>
</feature>
<feature type="glycosylation site" description="(Microbial infection) N-beta-linked (GlcNAc) arginine" evidence="24">
    <location>
        <position position="197"/>
    </location>
</feature>
<feature type="glycosylation site" description="(Microbial infection) N-beta-linked (GlcNAc) arginine" evidence="24">
    <location>
        <position position="200"/>
    </location>
</feature>
<feature type="cross-link" description="Glycyl lysine isopeptide (Lys-Gly) (interchain with G-Cter in SUMO2)" evidence="46">
    <location>
        <position position="186"/>
    </location>
</feature>
<feature type="splice variant" id="VSP_047289" description="In isoform 2." evidence="30">
    <location>
        <begin position="1"/>
        <end position="42"/>
    </location>
</feature>
<feature type="sequence variant" id="VAR_018889" description="In dbSNP:rs45541435." evidence="26">
    <original>A</original>
    <variation>G</variation>
    <location>
        <position position="22"/>
    </location>
</feature>
<feature type="sequence variant" id="VAR_049218" description="In dbSNP:rs1062429.">
    <original>K</original>
    <variation>N</variation>
    <location>
        <position position="251"/>
    </location>
</feature>
<feature type="mutagenesis site" description="Drastic reduction of the extent and significant prolongation of the lag phase of free radical-induced aggregation." evidence="21">
    <original>M</original>
    <variation>L</variation>
    <location>
        <position position="46"/>
    </location>
</feature>
<feature type="mutagenesis site" description="Increased resistance to free radical-induced aggregation." evidence="21">
    <original>M</original>
    <variation>L</variation>
    <location>
        <position position="105"/>
    </location>
</feature>
<feature type="mutagenesis site" description="Markedly reduced glycolytic activity; when associated with S-156 and S-247. Forms free radical-induced aggregates, but to a lesser extent than wild-type protein; when associated with S-156 and S-247. Abolished interaction with TRAF2 and TRAF3." evidence="20 21 23">
    <original>C</original>
    <variation>S</variation>
    <location>
        <position position="152"/>
    </location>
</feature>
<feature type="mutagenesis site" description="Markedly reduced glycolytic activity; when associated with S-152 and S-247. Forms free radical-induced aggregates, but to a lesser extent than wild-type protein; when associated with S-156 and S-247." evidence="21">
    <original>C</original>
    <variation>S</variation>
    <location>
        <position position="156"/>
    </location>
</feature>
<feature type="mutagenesis site" description="Increased free radical-induced aggregation." evidence="21">
    <original>W</original>
    <variation>F</variation>
    <location>
        <position position="196"/>
    </location>
</feature>
<feature type="mutagenesis site" description="Does not affect glycosylation by C.rodentium protein NleB." evidence="20">
    <original>T</original>
    <variation>A</variation>
    <location>
        <position position="211"/>
    </location>
</feature>
<feature type="mutagenesis site" description="Does not affect glycosylation by C.rodentium protein NleB." evidence="20">
    <original>T</original>
    <variation>A</variation>
    <location>
        <position position="229"/>
    </location>
</feature>
<feature type="mutagenesis site" description="Does not affect glycosylation by C.rodentium protein NleB." evidence="20">
    <original>S</original>
    <variation>A</variation>
    <location>
        <position position="241"/>
    </location>
</feature>
<feature type="mutagenesis site" description="Inhibits S-nitrosylation of Cys-247; when associated with M-250." evidence="22">
    <original>L</original>
    <variation>M</variation>
    <location>
        <position position="245"/>
    </location>
</feature>
<feature type="mutagenesis site" description="Does not affect glycosylation by C.rodentium protein NleB." evidence="20">
    <original>T</original>
    <variation>A</variation>
    <location>
        <position position="246"/>
    </location>
</feature>
<feature type="mutagenesis site" description="Markedly reduced glycolytic activity; when associated with S-152 and S-156. Forms free radical-induced aggregates, but to a lesser extent than wild-type protein; when associated with S-156 and S-247." evidence="21">
    <original>C</original>
    <variation>S</variation>
    <location>
        <position position="247"/>
    </location>
</feature>
<feature type="mutagenesis site" description="Inhibits S-nitrosylation of Cys-247; when associated with M-245." evidence="22">
    <original>E</original>
    <variation>M</variation>
    <location>
        <position position="250"/>
    </location>
</feature>
<feature type="mutagenesis site" description="Does not affect glycosylation by C.rodentium protein NleB." evidence="20">
    <original>T</original>
    <variation>A</variation>
    <location>
        <position position="277"/>
    </location>
</feature>
<feature type="mutagenesis site" description="No effect on free radical-induced aggregation." evidence="21">
    <original>Y</original>
    <variation>F</variation>
    <location>
        <position position="320"/>
    </location>
</feature>
<feature type="sequence conflict" description="In Ref. 2; CAA25833." evidence="30" ref="2">
    <original>N</original>
    <variation>D</variation>
    <location>
        <position position="225"/>
    </location>
</feature>
<feature type="strand" evidence="47">
    <location>
        <begin position="5"/>
        <end position="9"/>
    </location>
</feature>
<feature type="helix" evidence="47">
    <location>
        <begin position="13"/>
        <end position="25"/>
    </location>
</feature>
<feature type="strand" evidence="47">
    <location>
        <begin position="27"/>
        <end position="34"/>
    </location>
</feature>
<feature type="strand" evidence="47">
    <location>
        <begin position="36"/>
        <end position="38"/>
    </location>
</feature>
<feature type="helix" evidence="47">
    <location>
        <begin position="40"/>
        <end position="48"/>
    </location>
</feature>
<feature type="turn" evidence="47">
    <location>
        <begin position="51"/>
        <end position="53"/>
    </location>
</feature>
<feature type="strand" evidence="47">
    <location>
        <begin position="60"/>
        <end position="63"/>
    </location>
</feature>
<feature type="strand" evidence="47">
    <location>
        <begin position="66"/>
        <end position="69"/>
    </location>
</feature>
<feature type="strand" evidence="47">
    <location>
        <begin position="72"/>
        <end position="77"/>
    </location>
</feature>
<feature type="helix" evidence="47">
    <location>
        <begin position="82"/>
        <end position="84"/>
    </location>
</feature>
<feature type="helix" evidence="47">
    <location>
        <begin position="88"/>
        <end position="90"/>
    </location>
</feature>
<feature type="strand" evidence="47">
    <location>
        <begin position="94"/>
        <end position="97"/>
    </location>
</feature>
<feature type="strand" evidence="47">
    <location>
        <begin position="99"/>
        <end position="101"/>
    </location>
</feature>
<feature type="helix" evidence="47">
    <location>
        <begin position="105"/>
        <end position="108"/>
    </location>
</feature>
<feature type="helix" evidence="47">
    <location>
        <begin position="110"/>
        <end position="113"/>
    </location>
</feature>
<feature type="strand" evidence="47">
    <location>
        <begin position="117"/>
        <end position="123"/>
    </location>
</feature>
<feature type="strand" evidence="47">
    <location>
        <begin position="126"/>
        <end position="128"/>
    </location>
</feature>
<feature type="turn" evidence="47">
    <location>
        <begin position="133"/>
        <end position="135"/>
    </location>
</feature>
<feature type="helix" evidence="47">
    <location>
        <begin position="137"/>
        <end position="139"/>
    </location>
</feature>
<feature type="strand" evidence="47">
    <location>
        <begin position="146"/>
        <end position="148"/>
    </location>
</feature>
<feature type="helix" evidence="47">
    <location>
        <begin position="152"/>
        <end position="168"/>
    </location>
</feature>
<feature type="strand" evidence="47">
    <location>
        <begin position="170"/>
        <end position="179"/>
    </location>
</feature>
<feature type="strand" evidence="47">
    <location>
        <begin position="185"/>
        <end position="189"/>
    </location>
</feature>
<feature type="helix" evidence="47">
    <location>
        <begin position="196"/>
        <end position="199"/>
    </location>
</feature>
<feature type="turn" evidence="47">
    <location>
        <begin position="202"/>
        <end position="204"/>
    </location>
</feature>
<feature type="strand" evidence="47">
    <location>
        <begin position="207"/>
        <end position="210"/>
    </location>
</feature>
<feature type="helix" evidence="47">
    <location>
        <begin position="213"/>
        <end position="220"/>
    </location>
</feature>
<feature type="helix" evidence="47">
    <location>
        <begin position="222"/>
        <end position="224"/>
    </location>
</feature>
<feature type="strand" evidence="47">
    <location>
        <begin position="227"/>
        <end position="234"/>
    </location>
</feature>
<feature type="strand" evidence="47">
    <location>
        <begin position="241"/>
        <end position="251"/>
    </location>
</feature>
<feature type="helix" evidence="47">
    <location>
        <begin position="255"/>
        <end position="267"/>
    </location>
</feature>
<feature type="turn" evidence="47">
    <location>
        <begin position="268"/>
        <end position="273"/>
    </location>
</feature>
<feature type="strand" evidence="47">
    <location>
        <begin position="274"/>
        <end position="277"/>
    </location>
</feature>
<feature type="helix" evidence="47">
    <location>
        <begin position="283"/>
        <end position="286"/>
    </location>
</feature>
<feature type="strand" evidence="47">
    <location>
        <begin position="292"/>
        <end position="296"/>
    </location>
</feature>
<feature type="turn" evidence="47">
    <location>
        <begin position="297"/>
        <end position="299"/>
    </location>
</feature>
<feature type="strand" evidence="47">
    <location>
        <begin position="301"/>
        <end position="304"/>
    </location>
</feature>
<feature type="strand" evidence="47">
    <location>
        <begin position="307"/>
        <end position="314"/>
    </location>
</feature>
<feature type="helix" evidence="47">
    <location>
        <begin position="318"/>
        <end position="333"/>
    </location>
</feature>
<sequence length="335" mass="36053">MGKVKVGVNGFGRIGRLVTRAAFNSGKVDIVAINDPFIDLNYMVYMFQYDSTHGKFHGTVKAENGKLVINGNPITIFQERDPSKIKWGDAGAEYVVESTGVFTTMEKAGAHLQGGAKRVIISAPSADAPMFVMGVNHEKYDNSLKIISNASCTTNCLAPLAKVIHDNFGIVEGLMTTVHAITATQKTVDGPSGKLWRDGRGALQNIIPASTGAAKAVGKVIPELNGKLTGMAFRVPTANVSVVDLTCRLEKPAKYDDIKKVVKQASEGPLKGILGYTEHQVVSSDFNSDTHSSTFDAGAGIALNDHFVKLISWYDNEFGYSNRVVDLMAHMASKE</sequence>
<accession>P04406</accession>
<accession>E7EUT4</accession>
<accession>P00354</accession>
<accession>Q53X65</accession>
<dbReference type="EC" id="1.2.1.12" evidence="25"/>
<dbReference type="EC" id="2.6.99.-" evidence="1"/>
<dbReference type="EMBL" id="X01677">
    <property type="protein sequence ID" value="CAA25833.1"/>
    <property type="molecule type" value="mRNA"/>
</dbReference>
<dbReference type="EMBL" id="M17851">
    <property type="protein sequence ID" value="AAA86283.1"/>
    <property type="molecule type" value="mRNA"/>
</dbReference>
<dbReference type="EMBL" id="M33197">
    <property type="protein sequence ID" value="AAA52518.1"/>
    <property type="molecule type" value="mRNA"/>
</dbReference>
<dbReference type="EMBL" id="J02642">
    <property type="protein sequence ID" value="AAA52496.1"/>
    <property type="molecule type" value="mRNA"/>
</dbReference>
<dbReference type="EMBL" id="J04038">
    <property type="protein sequence ID" value="AAA53191.1"/>
    <property type="molecule type" value="Genomic_DNA"/>
</dbReference>
<dbReference type="EMBL" id="X53778">
    <property type="protein sequence ID" value="CAA37794.1"/>
    <property type="molecule type" value="mRNA"/>
</dbReference>
<dbReference type="EMBL" id="AF261085">
    <property type="protein sequence ID" value="AAF99678.1"/>
    <property type="molecule type" value="mRNA"/>
</dbReference>
<dbReference type="EMBL" id="AY007133">
    <property type="protein sequence ID" value="AAG01996.1"/>
    <property type="molecule type" value="mRNA"/>
</dbReference>
<dbReference type="EMBL" id="AB062273">
    <property type="protein sequence ID" value="BAB93466.1"/>
    <property type="molecule type" value="mRNA"/>
</dbReference>
<dbReference type="EMBL" id="BT006893">
    <property type="protein sequence ID" value="AAP35539.1"/>
    <property type="molecule type" value="mRNA"/>
</dbReference>
<dbReference type="EMBL" id="AY340484">
    <property type="protein sequence ID" value="AAP88932.1"/>
    <property type="molecule type" value="Genomic_DNA"/>
</dbReference>
<dbReference type="EMBL" id="CR407671">
    <property type="protein sequence ID" value="CAG28599.1"/>
    <property type="molecule type" value="mRNA"/>
</dbReference>
<dbReference type="EMBL" id="AC006064">
    <property type="status" value="NOT_ANNOTATED_CDS"/>
    <property type="molecule type" value="Genomic_DNA"/>
</dbReference>
<dbReference type="EMBL" id="CH471116">
    <property type="protein sequence ID" value="EAW88787.1"/>
    <property type="molecule type" value="Genomic_DNA"/>
</dbReference>
<dbReference type="EMBL" id="BC001601">
    <property type="protein sequence ID" value="AAH01601.1"/>
    <property type="molecule type" value="mRNA"/>
</dbReference>
<dbReference type="EMBL" id="BC004109">
    <property type="protein sequence ID" value="AAH04109.1"/>
    <property type="molecule type" value="mRNA"/>
</dbReference>
<dbReference type="EMBL" id="BC009081">
    <property type="protein sequence ID" value="AAH09081.1"/>
    <property type="molecule type" value="mRNA"/>
</dbReference>
<dbReference type="EMBL" id="BC013310">
    <property type="protein sequence ID" value="AAH13310.1"/>
    <property type="molecule type" value="mRNA"/>
</dbReference>
<dbReference type="EMBL" id="BC023632">
    <property type="protein sequence ID" value="AAH23632.1"/>
    <property type="molecule type" value="mRNA"/>
</dbReference>
<dbReference type="EMBL" id="BC025925">
    <property type="protein sequence ID" value="AAH25925.1"/>
    <property type="molecule type" value="mRNA"/>
</dbReference>
<dbReference type="EMBL" id="BC026907">
    <property type="protein sequence ID" value="AAH26907.1"/>
    <property type="molecule type" value="mRNA"/>
</dbReference>
<dbReference type="EMBL" id="BC029618">
    <property type="protein sequence ID" value="AAH29618.1"/>
    <property type="molecule type" value="mRNA"/>
</dbReference>
<dbReference type="EMBL" id="BC083511">
    <property type="protein sequence ID" value="AAH83511.1"/>
    <property type="molecule type" value="mRNA"/>
</dbReference>
<dbReference type="CCDS" id="CCDS58201.1">
    <molecule id="P04406-2"/>
</dbReference>
<dbReference type="CCDS" id="CCDS8549.1">
    <molecule id="P04406-1"/>
</dbReference>
<dbReference type="PIR" id="A31988">
    <property type="entry name" value="DEHUG3"/>
</dbReference>
<dbReference type="RefSeq" id="NP_001243728.1">
    <molecule id="P04406-2"/>
    <property type="nucleotide sequence ID" value="NM_001256799.3"/>
</dbReference>
<dbReference type="RefSeq" id="NP_001276674.1">
    <molecule id="P04406-1"/>
    <property type="nucleotide sequence ID" value="NM_001289745.3"/>
</dbReference>
<dbReference type="RefSeq" id="NP_001276675.1">
    <molecule id="P04406-1"/>
    <property type="nucleotide sequence ID" value="NM_001289746.2"/>
</dbReference>
<dbReference type="RefSeq" id="NP_002037.2">
    <molecule id="P04406-1"/>
    <property type="nucleotide sequence ID" value="NM_002046.5"/>
</dbReference>
<dbReference type="PDB" id="1U8F">
    <property type="method" value="X-ray"/>
    <property type="resolution" value="1.75 A"/>
    <property type="chains" value="O/P/Q/R=1-335"/>
</dbReference>
<dbReference type="PDB" id="1ZNQ">
    <property type="method" value="X-ray"/>
    <property type="resolution" value="2.50 A"/>
    <property type="chains" value="O/P/Q/R=1-335"/>
</dbReference>
<dbReference type="PDB" id="3GPD">
    <property type="method" value="X-ray"/>
    <property type="resolution" value="3.50 A"/>
    <property type="chains" value="G/R=2-335"/>
</dbReference>
<dbReference type="PDB" id="4WNC">
    <property type="method" value="X-ray"/>
    <property type="resolution" value="1.99 A"/>
    <property type="chains" value="A/B/C/D/E/F/G/O=1-335"/>
</dbReference>
<dbReference type="PDB" id="4WNI">
    <property type="method" value="X-ray"/>
    <property type="resolution" value="2.30 A"/>
    <property type="chains" value="A/B/C/O=1-335"/>
</dbReference>
<dbReference type="PDB" id="6ADE">
    <property type="method" value="X-ray"/>
    <property type="resolution" value="3.15 A"/>
    <property type="chains" value="A/B/C=1-335"/>
</dbReference>
<dbReference type="PDB" id="6IQ6">
    <property type="method" value="X-ray"/>
    <property type="resolution" value="2.29 A"/>
    <property type="chains" value="A/B/C/D/E/F/G/H=1-335"/>
</dbReference>
<dbReference type="PDB" id="6M61">
    <property type="method" value="X-ray"/>
    <property type="resolution" value="1.82 A"/>
    <property type="chains" value="O/P/Q/R=1-335"/>
</dbReference>
<dbReference type="PDB" id="6YND">
    <property type="method" value="X-ray"/>
    <property type="resolution" value="1.52 A"/>
    <property type="chains" value="A/B/C/D/E/F/G/H=1-335"/>
</dbReference>
<dbReference type="PDB" id="6YNE">
    <property type="method" value="X-ray"/>
    <property type="resolution" value="1.85 A"/>
    <property type="chains" value="A/B/C/D=1-335"/>
</dbReference>
<dbReference type="PDB" id="6YNF">
    <property type="method" value="X-ray"/>
    <property type="resolution" value="2.39 A"/>
    <property type="chains" value="A/B/C/D/E/F/G/H=2-335"/>
</dbReference>
<dbReference type="PDB" id="6YNH">
    <property type="method" value="X-ray"/>
    <property type="resolution" value="2.62 A"/>
    <property type="chains" value="B/D/F/G=1-335"/>
</dbReference>
<dbReference type="PDB" id="8DNS">
    <property type="method" value="EM"/>
    <property type="resolution" value="3.22 A"/>
    <property type="chains" value="O/P/Q/R=1-335"/>
</dbReference>
<dbReference type="PDB" id="8G12">
    <property type="method" value="EM"/>
    <property type="resolution" value="2.17 A"/>
    <property type="chains" value="A/B/C/D=2-335"/>
</dbReference>
<dbReference type="PDB" id="8G13">
    <property type="method" value="EM"/>
    <property type="resolution" value="2.30 A"/>
    <property type="chains" value="A/B/C/D=2-335"/>
</dbReference>
<dbReference type="PDB" id="8G14">
    <property type="method" value="EM"/>
    <property type="resolution" value="2.30 A"/>
    <property type="chains" value="A/B/C/D=2-335"/>
</dbReference>
<dbReference type="PDB" id="8G15">
    <property type="method" value="EM"/>
    <property type="resolution" value="2.07 A"/>
    <property type="chains" value="A/B/C/D=2-335"/>
</dbReference>
<dbReference type="PDB" id="8G16">
    <property type="method" value="EM"/>
    <property type="resolution" value="2.07 A"/>
    <property type="chains" value="A/B/C/D=2-335"/>
</dbReference>
<dbReference type="PDB" id="8G17">
    <property type="method" value="EM"/>
    <property type="resolution" value="1.98 A"/>
    <property type="chains" value="A/B/C/D=2-335"/>
</dbReference>
<dbReference type="PDB" id="8P5F">
    <property type="method" value="X-ray"/>
    <property type="resolution" value="1.82 A"/>
    <property type="chains" value="AAA/DDD/EEE/GGG=1-335"/>
</dbReference>
<dbReference type="PDBsum" id="1U8F"/>
<dbReference type="PDBsum" id="1ZNQ"/>
<dbReference type="PDBsum" id="3GPD"/>
<dbReference type="PDBsum" id="4WNC"/>
<dbReference type="PDBsum" id="4WNI"/>
<dbReference type="PDBsum" id="6ADE"/>
<dbReference type="PDBsum" id="6IQ6"/>
<dbReference type="PDBsum" id="6M61"/>
<dbReference type="PDBsum" id="6YND"/>
<dbReference type="PDBsum" id="6YNE"/>
<dbReference type="PDBsum" id="6YNF"/>
<dbReference type="PDBsum" id="6YNH"/>
<dbReference type="PDBsum" id="8DNS"/>
<dbReference type="PDBsum" id="8G12"/>
<dbReference type="PDBsum" id="8G13"/>
<dbReference type="PDBsum" id="8G14"/>
<dbReference type="PDBsum" id="8G15"/>
<dbReference type="PDBsum" id="8G16"/>
<dbReference type="PDBsum" id="8G17"/>
<dbReference type="PDBsum" id="8P5F"/>
<dbReference type="EMDB" id="EMD-27579"/>
<dbReference type="EMDB" id="EMD-29659"/>
<dbReference type="EMDB" id="EMD-29660"/>
<dbReference type="EMDB" id="EMD-29661"/>
<dbReference type="EMDB" id="EMD-29662"/>
<dbReference type="EMDB" id="EMD-29663"/>
<dbReference type="EMDB" id="EMD-29664"/>
<dbReference type="EMDB" id="EMD-32162"/>
<dbReference type="SMR" id="P04406"/>
<dbReference type="BioGRID" id="108868">
    <property type="interactions" value="735"/>
</dbReference>
<dbReference type="ComplexPortal" id="CPX-2476">
    <property type="entry name" value="GAIT complex"/>
</dbReference>
<dbReference type="CORUM" id="P04406"/>
<dbReference type="DIP" id="DIP-32521N"/>
<dbReference type="FunCoup" id="P04406">
    <property type="interactions" value="1599"/>
</dbReference>
<dbReference type="IntAct" id="P04406">
    <property type="interactions" value="248"/>
</dbReference>
<dbReference type="MINT" id="P04406"/>
<dbReference type="STRING" id="9606.ENSP00000380070"/>
<dbReference type="BindingDB" id="P04406"/>
<dbReference type="ChEMBL" id="CHEMBL2284"/>
<dbReference type="DrugBank" id="DB07347">
    <property type="generic name" value="4-(2-Aminoethyl)Benzenesulfonyl Fluoride"/>
</dbReference>
<dbReference type="DrugBank" id="DB02059">
    <property type="generic name" value="Adenosine-5-Diphosphoribose"/>
</dbReference>
<dbReference type="DrugBank" id="DB11638">
    <property type="generic name" value="Artenimol"/>
</dbReference>
<dbReference type="DrugBank" id="DB09130">
    <property type="generic name" value="Copper"/>
</dbReference>
<dbReference type="DrugBank" id="DB00157">
    <property type="generic name" value="NADH"/>
</dbReference>
<dbReference type="DrugBank" id="DB12879">
    <property type="generic name" value="Omigapil"/>
</dbReference>
<dbReference type="DrugBank" id="DB03893">
    <property type="generic name" value="Thionicotinamide-Adenine-Dinucleotide"/>
</dbReference>
<dbReference type="DrugBank" id="DB09092">
    <property type="generic name" value="Xanthinol"/>
</dbReference>
<dbReference type="DrugCentral" id="P04406"/>
<dbReference type="MoonDB" id="P04406">
    <property type="type" value="Curated"/>
</dbReference>
<dbReference type="MoonProt" id="P04406"/>
<dbReference type="GlyConnect" id="1941">
    <property type="glycosylation" value="7 N-Linked glycans (2 sites)"/>
</dbReference>
<dbReference type="GlyCosmos" id="P04406">
    <property type="glycosylation" value="6 sites, 9 glycans"/>
</dbReference>
<dbReference type="GlyGen" id="P04406">
    <property type="glycosylation" value="5 sites, 18 N-linked glycans (2 sites), 2 O-linked glycans (2 sites)"/>
</dbReference>
<dbReference type="iPTMnet" id="P04406"/>
<dbReference type="MetOSite" id="P04406"/>
<dbReference type="PhosphoSitePlus" id="P04406"/>
<dbReference type="SwissPalm" id="P04406"/>
<dbReference type="BioMuta" id="GAPDH"/>
<dbReference type="DMDM" id="120649"/>
<dbReference type="OGP" id="P04406"/>
<dbReference type="REPRODUCTION-2DPAGE" id="IPI00219018"/>
<dbReference type="REPRODUCTION-2DPAGE" id="P04406"/>
<dbReference type="CPTAC" id="CPTAC-2733"/>
<dbReference type="CPTAC" id="CPTAC-5855"/>
<dbReference type="CPTAC" id="CPTAC-5880"/>
<dbReference type="CPTAC" id="CPTAC-5942"/>
<dbReference type="jPOST" id="P04406"/>
<dbReference type="MassIVE" id="P04406"/>
<dbReference type="PaxDb" id="9606-ENSP00000229239"/>
<dbReference type="PeptideAtlas" id="P04406"/>
<dbReference type="PRIDE" id="P04406"/>
<dbReference type="ProteomicsDB" id="18491"/>
<dbReference type="ProteomicsDB" id="51703">
    <molecule id="P04406-1"/>
</dbReference>
<dbReference type="Pumba" id="P04406"/>
<dbReference type="TopDownProteomics" id="P04406-1">
    <molecule id="P04406-1"/>
</dbReference>
<dbReference type="ABCD" id="P04406">
    <property type="antibodies" value="1 sequenced antibody"/>
</dbReference>
<dbReference type="Antibodypedia" id="3923">
    <property type="antibodies" value="2683 antibodies from 59 providers"/>
</dbReference>
<dbReference type="CPTC" id="P04406">
    <property type="antibodies" value="1 antibody"/>
</dbReference>
<dbReference type="DNASU" id="2597"/>
<dbReference type="Ensembl" id="ENST00000229239.10">
    <molecule id="P04406-1"/>
    <property type="protein sequence ID" value="ENSP00000229239.5"/>
    <property type="gene ID" value="ENSG00000111640.15"/>
</dbReference>
<dbReference type="Ensembl" id="ENST00000396858.5">
    <molecule id="P04406-2"/>
    <property type="protein sequence ID" value="ENSP00000380067.1"/>
    <property type="gene ID" value="ENSG00000111640.15"/>
</dbReference>
<dbReference type="Ensembl" id="ENST00000396859.5">
    <molecule id="P04406-1"/>
    <property type="protein sequence ID" value="ENSP00000380068.1"/>
    <property type="gene ID" value="ENSG00000111640.15"/>
</dbReference>
<dbReference type="Ensembl" id="ENST00000396861.5">
    <molecule id="P04406-1"/>
    <property type="protein sequence ID" value="ENSP00000380070.1"/>
    <property type="gene ID" value="ENSG00000111640.15"/>
</dbReference>
<dbReference type="Ensembl" id="ENST00000619601.1">
    <molecule id="P04406-2"/>
    <property type="protein sequence ID" value="ENSP00000478864.1"/>
    <property type="gene ID" value="ENSG00000111640.15"/>
</dbReference>
<dbReference type="GeneID" id="2597"/>
<dbReference type="KEGG" id="hsa:2597"/>
<dbReference type="MANE-Select" id="ENST00000229239.10">
    <property type="protein sequence ID" value="ENSP00000229239.5"/>
    <property type="RefSeq nucleotide sequence ID" value="NM_002046.7"/>
    <property type="RefSeq protein sequence ID" value="NP_002037.2"/>
</dbReference>
<dbReference type="UCSC" id="uc031qfw.3">
    <molecule id="P04406-1"/>
    <property type="organism name" value="human"/>
</dbReference>
<dbReference type="AGR" id="HGNC:4141"/>
<dbReference type="CTD" id="2597"/>
<dbReference type="DisGeNET" id="2597"/>
<dbReference type="GeneCards" id="GAPDH"/>
<dbReference type="HGNC" id="HGNC:4141">
    <property type="gene designation" value="GAPDH"/>
</dbReference>
<dbReference type="HPA" id="ENSG00000111640">
    <property type="expression patterns" value="Group enriched (skeletal muscle, tongue)"/>
</dbReference>
<dbReference type="MalaCards" id="GAPDH"/>
<dbReference type="MIM" id="138400">
    <property type="type" value="gene"/>
</dbReference>
<dbReference type="neXtProt" id="NX_P04406"/>
<dbReference type="OpenTargets" id="ENSG00000111640"/>
<dbReference type="PharmGKB" id="PA28554"/>
<dbReference type="VEuPathDB" id="HostDB:ENSG00000111640"/>
<dbReference type="eggNOG" id="KOG0657">
    <property type="taxonomic scope" value="Eukaryota"/>
</dbReference>
<dbReference type="GeneTree" id="ENSGT00940000153298"/>
<dbReference type="HOGENOM" id="CLU_030140_0_3_1"/>
<dbReference type="InParanoid" id="P04406"/>
<dbReference type="OMA" id="YGYTCNM"/>
<dbReference type="OrthoDB" id="9528699at2759"/>
<dbReference type="PAN-GO" id="P04406">
    <property type="GO annotations" value="3 GO annotations based on evolutionary models"/>
</dbReference>
<dbReference type="PhylomeDB" id="P04406"/>
<dbReference type="TreeFam" id="TF300533"/>
<dbReference type="BioCyc" id="MetaCyc:HS03433-MONOMER"/>
<dbReference type="BRENDA" id="1.2.1.12">
    <property type="organism ID" value="2681"/>
</dbReference>
<dbReference type="PathwayCommons" id="P04406"/>
<dbReference type="Reactome" id="R-HSA-70171">
    <property type="pathway name" value="Glycolysis"/>
</dbReference>
<dbReference type="Reactome" id="R-HSA-70263">
    <property type="pathway name" value="Gluconeogenesis"/>
</dbReference>
<dbReference type="SABIO-RK" id="P04406"/>
<dbReference type="SignaLink" id="P04406"/>
<dbReference type="SIGNOR" id="P04406"/>
<dbReference type="UniPathway" id="UPA00109">
    <property type="reaction ID" value="UER00184"/>
</dbReference>
<dbReference type="BioGRID-ORCS" id="2597">
    <property type="hits" value="626 hits in 1149 CRISPR screens"/>
</dbReference>
<dbReference type="CD-CODE" id="232F8A39">
    <property type="entry name" value="P-body"/>
</dbReference>
<dbReference type="CD-CODE" id="91857CE7">
    <property type="entry name" value="Nucleolus"/>
</dbReference>
<dbReference type="CD-CODE" id="FB4E32DD">
    <property type="entry name" value="Presynaptic clusters and postsynaptic densities"/>
</dbReference>
<dbReference type="ChiTaRS" id="GAPDH">
    <property type="organism name" value="human"/>
</dbReference>
<dbReference type="EvolutionaryTrace" id="P04406"/>
<dbReference type="GeneWiki" id="Glyceraldehyde_3-phosphate_dehydrogenase"/>
<dbReference type="GenomeRNAi" id="2597"/>
<dbReference type="Pharos" id="P04406">
    <property type="development level" value="Tchem"/>
</dbReference>
<dbReference type="PRO" id="PR:P04406"/>
<dbReference type="Proteomes" id="UP000005640">
    <property type="component" value="Chromosome 12"/>
</dbReference>
<dbReference type="RNAct" id="P04406">
    <property type="molecule type" value="protein"/>
</dbReference>
<dbReference type="Bgee" id="ENSG00000111640">
    <property type="expression patterns" value="Expressed in frontal pole and 218 other cell types or tissues"/>
</dbReference>
<dbReference type="ExpressionAtlas" id="P04406">
    <property type="expression patterns" value="baseline and differential"/>
</dbReference>
<dbReference type="GO" id="GO:0005737">
    <property type="term" value="C:cytoplasm"/>
    <property type="evidence" value="ECO:0000314"/>
    <property type="project" value="UniProtKB"/>
</dbReference>
<dbReference type="GO" id="GO:0005829">
    <property type="term" value="C:cytosol"/>
    <property type="evidence" value="ECO:0000314"/>
    <property type="project" value="HPA"/>
</dbReference>
<dbReference type="GO" id="GO:0070062">
    <property type="term" value="C:extracellular exosome"/>
    <property type="evidence" value="ECO:0007005"/>
    <property type="project" value="UniProtKB"/>
</dbReference>
<dbReference type="GO" id="GO:0097452">
    <property type="term" value="C:GAIT complex"/>
    <property type="evidence" value="ECO:0000314"/>
    <property type="project" value="UniProtKB"/>
</dbReference>
<dbReference type="GO" id="GO:0043231">
    <property type="term" value="C:intracellular membrane-bounded organelle"/>
    <property type="evidence" value="ECO:0000314"/>
    <property type="project" value="HPA"/>
</dbReference>
<dbReference type="GO" id="GO:0005811">
    <property type="term" value="C:lipid droplet"/>
    <property type="evidence" value="ECO:0000314"/>
    <property type="project" value="UniProtKB"/>
</dbReference>
<dbReference type="GO" id="GO:0016020">
    <property type="term" value="C:membrane"/>
    <property type="evidence" value="ECO:0007005"/>
    <property type="project" value="UniProtKB"/>
</dbReference>
<dbReference type="GO" id="GO:0015630">
    <property type="term" value="C:microtubule cytoskeleton"/>
    <property type="evidence" value="ECO:0000250"/>
    <property type="project" value="UniProtKB"/>
</dbReference>
<dbReference type="GO" id="GO:0031965">
    <property type="term" value="C:nuclear membrane"/>
    <property type="evidence" value="ECO:0000314"/>
    <property type="project" value="HPA"/>
</dbReference>
<dbReference type="GO" id="GO:0005634">
    <property type="term" value="C:nucleus"/>
    <property type="evidence" value="ECO:0000314"/>
    <property type="project" value="CACAO"/>
</dbReference>
<dbReference type="GO" id="GO:0048471">
    <property type="term" value="C:perinuclear region of cytoplasm"/>
    <property type="evidence" value="ECO:0007669"/>
    <property type="project" value="UniProtKB-SubCell"/>
</dbReference>
<dbReference type="GO" id="GO:0005886">
    <property type="term" value="C:plasma membrane"/>
    <property type="evidence" value="ECO:0000314"/>
    <property type="project" value="HPA"/>
</dbReference>
<dbReference type="GO" id="GO:1990904">
    <property type="term" value="C:ribonucleoprotein complex"/>
    <property type="evidence" value="ECO:0000314"/>
    <property type="project" value="UniProtKB"/>
</dbReference>
<dbReference type="GO" id="GO:0031982">
    <property type="term" value="C:vesicle"/>
    <property type="evidence" value="ECO:0007005"/>
    <property type="project" value="UniProtKB"/>
</dbReference>
<dbReference type="GO" id="GO:0019828">
    <property type="term" value="F:aspartic-type endopeptidase inhibitor activity"/>
    <property type="evidence" value="ECO:0000314"/>
    <property type="project" value="UniProtKB"/>
</dbReference>
<dbReference type="GO" id="GO:0097718">
    <property type="term" value="F:disordered domain specific binding"/>
    <property type="evidence" value="ECO:0000353"/>
    <property type="project" value="CAFA"/>
</dbReference>
<dbReference type="GO" id="GO:0004365">
    <property type="term" value="F:glyceraldehyde-3-phosphate dehydrogenase (NAD+) (phosphorylating) activity"/>
    <property type="evidence" value="ECO:0000250"/>
    <property type="project" value="UniProtKB"/>
</dbReference>
<dbReference type="GO" id="GO:0042802">
    <property type="term" value="F:identical protein binding"/>
    <property type="evidence" value="ECO:0000353"/>
    <property type="project" value="IntAct"/>
</dbReference>
<dbReference type="GO" id="GO:0008017">
    <property type="term" value="F:microtubule binding"/>
    <property type="evidence" value="ECO:0000250"/>
    <property type="project" value="UniProtKB"/>
</dbReference>
<dbReference type="GO" id="GO:0051287">
    <property type="term" value="F:NAD binding"/>
    <property type="evidence" value="ECO:0007669"/>
    <property type="project" value="InterPro"/>
</dbReference>
<dbReference type="GO" id="GO:0050661">
    <property type="term" value="F:NADP binding"/>
    <property type="evidence" value="ECO:0007669"/>
    <property type="project" value="InterPro"/>
</dbReference>
<dbReference type="GO" id="GO:0035605">
    <property type="term" value="F:peptidyl-cysteine S-nitrosylase activity"/>
    <property type="evidence" value="ECO:0000250"/>
    <property type="project" value="UniProtKB"/>
</dbReference>
<dbReference type="GO" id="GO:0061844">
    <property type="term" value="P:antimicrobial humoral immune response mediated by antimicrobial peptide"/>
    <property type="evidence" value="ECO:0000314"/>
    <property type="project" value="UniProtKB"/>
</dbReference>
<dbReference type="GO" id="GO:0071346">
    <property type="term" value="P:cellular response to type II interferon"/>
    <property type="evidence" value="ECO:0000314"/>
    <property type="project" value="UniProtKB"/>
</dbReference>
<dbReference type="GO" id="GO:0050832">
    <property type="term" value="P:defense response to fungus"/>
    <property type="evidence" value="ECO:0000314"/>
    <property type="project" value="UniProtKB"/>
</dbReference>
<dbReference type="GO" id="GO:0006006">
    <property type="term" value="P:glucose metabolic process"/>
    <property type="evidence" value="ECO:0007669"/>
    <property type="project" value="InterPro"/>
</dbReference>
<dbReference type="GO" id="GO:0006096">
    <property type="term" value="P:glycolytic process"/>
    <property type="evidence" value="ECO:0000318"/>
    <property type="project" value="GO_Central"/>
</dbReference>
<dbReference type="GO" id="GO:0051873">
    <property type="term" value="P:killing by host of symbiont cells"/>
    <property type="evidence" value="ECO:0000314"/>
    <property type="project" value="UniProtKB"/>
</dbReference>
<dbReference type="GO" id="GO:0031640">
    <property type="term" value="P:killing of cells of another organism"/>
    <property type="evidence" value="ECO:0000314"/>
    <property type="project" value="UniProtKB"/>
</dbReference>
<dbReference type="GO" id="GO:0000226">
    <property type="term" value="P:microtubule cytoskeleton organization"/>
    <property type="evidence" value="ECO:0000250"/>
    <property type="project" value="UniProtKB"/>
</dbReference>
<dbReference type="GO" id="GO:0010951">
    <property type="term" value="P:negative regulation of endopeptidase activity"/>
    <property type="evidence" value="ECO:0000314"/>
    <property type="project" value="UniProtKB"/>
</dbReference>
<dbReference type="GO" id="GO:0017148">
    <property type="term" value="P:negative regulation of translation"/>
    <property type="evidence" value="ECO:0000314"/>
    <property type="project" value="UniProtKB"/>
</dbReference>
<dbReference type="GO" id="GO:0051402">
    <property type="term" value="P:neuron apoptotic process"/>
    <property type="evidence" value="ECO:0000250"/>
    <property type="project" value="UniProtKB"/>
</dbReference>
<dbReference type="GO" id="GO:0035606">
    <property type="term" value="P:peptidyl-cysteine S-trans-nitrosylation"/>
    <property type="evidence" value="ECO:0000250"/>
    <property type="project" value="UniProtKB"/>
</dbReference>
<dbReference type="GO" id="GO:0043123">
    <property type="term" value="P:positive regulation of canonical NF-kappaB signal transduction"/>
    <property type="evidence" value="ECO:0000314"/>
    <property type="project" value="UniProtKB"/>
</dbReference>
<dbReference type="GO" id="GO:0001819">
    <property type="term" value="P:positive regulation of cytokine production"/>
    <property type="evidence" value="ECO:0000314"/>
    <property type="project" value="UniProtKB"/>
</dbReference>
<dbReference type="GO" id="GO:0032481">
    <property type="term" value="P:positive regulation of type I interferon production"/>
    <property type="evidence" value="ECO:0000314"/>
    <property type="project" value="UniProtKB"/>
</dbReference>
<dbReference type="GO" id="GO:0050821">
    <property type="term" value="P:protein stabilization"/>
    <property type="evidence" value="ECO:0000250"/>
    <property type="project" value="UniProtKB"/>
</dbReference>
<dbReference type="GO" id="GO:0016241">
    <property type="term" value="P:regulation of macroautophagy"/>
    <property type="evidence" value="ECO:0000304"/>
    <property type="project" value="ParkinsonsUK-UCL"/>
</dbReference>
<dbReference type="CDD" id="cd18126">
    <property type="entry name" value="GAPDH_I_C"/>
    <property type="match status" value="1"/>
</dbReference>
<dbReference type="CDD" id="cd05214">
    <property type="entry name" value="GAPDH_I_N"/>
    <property type="match status" value="1"/>
</dbReference>
<dbReference type="FunFam" id="3.30.360.10:FF:000001">
    <property type="entry name" value="Glyceraldehyde-3-phosphate dehydrogenase"/>
    <property type="match status" value="1"/>
</dbReference>
<dbReference type="FunFam" id="3.40.50.720:FF:001161">
    <property type="entry name" value="Glyceraldehyde-3-phosphate dehydrogenase"/>
    <property type="match status" value="1"/>
</dbReference>
<dbReference type="Gene3D" id="3.30.360.10">
    <property type="entry name" value="Dihydrodipicolinate Reductase, domain 2"/>
    <property type="match status" value="1"/>
</dbReference>
<dbReference type="Gene3D" id="3.40.50.720">
    <property type="entry name" value="NAD(P)-binding Rossmann-like Domain"/>
    <property type="match status" value="1"/>
</dbReference>
<dbReference type="InterPro" id="IPR020831">
    <property type="entry name" value="GlycerAld/Erythrose_P_DH"/>
</dbReference>
<dbReference type="InterPro" id="IPR020830">
    <property type="entry name" value="GlycerAld_3-P_DH_AS"/>
</dbReference>
<dbReference type="InterPro" id="IPR020829">
    <property type="entry name" value="GlycerAld_3-P_DH_cat"/>
</dbReference>
<dbReference type="InterPro" id="IPR020828">
    <property type="entry name" value="GlycerAld_3-P_DH_NAD(P)-bd"/>
</dbReference>
<dbReference type="InterPro" id="IPR006424">
    <property type="entry name" value="Glyceraldehyde-3-P_DH_1"/>
</dbReference>
<dbReference type="InterPro" id="IPR036291">
    <property type="entry name" value="NAD(P)-bd_dom_sf"/>
</dbReference>
<dbReference type="NCBIfam" id="TIGR01534">
    <property type="entry name" value="GAPDH-I"/>
    <property type="match status" value="1"/>
</dbReference>
<dbReference type="PANTHER" id="PTHR10836">
    <property type="entry name" value="GLYCERALDEHYDE 3-PHOSPHATE DEHYDROGENASE"/>
    <property type="match status" value="1"/>
</dbReference>
<dbReference type="PANTHER" id="PTHR10836:SF111">
    <property type="entry name" value="GLYCERALDEHYDE-3-PHOSPHATE DEHYDROGENASE"/>
    <property type="match status" value="1"/>
</dbReference>
<dbReference type="Pfam" id="PF02800">
    <property type="entry name" value="Gp_dh_C"/>
    <property type="match status" value="1"/>
</dbReference>
<dbReference type="Pfam" id="PF00044">
    <property type="entry name" value="Gp_dh_N"/>
    <property type="match status" value="1"/>
</dbReference>
<dbReference type="PIRSF" id="PIRSF000149">
    <property type="entry name" value="GAP_DH"/>
    <property type="match status" value="1"/>
</dbReference>
<dbReference type="PRINTS" id="PR00078">
    <property type="entry name" value="G3PDHDRGNASE"/>
</dbReference>
<dbReference type="SMART" id="SM00846">
    <property type="entry name" value="Gp_dh_N"/>
    <property type="match status" value="1"/>
</dbReference>
<dbReference type="SUPFAM" id="SSF55347">
    <property type="entry name" value="Glyceraldehyde-3-phosphate dehydrogenase-like, C-terminal domain"/>
    <property type="match status" value="1"/>
</dbReference>
<dbReference type="SUPFAM" id="SSF51735">
    <property type="entry name" value="NAD(P)-binding Rossmann-fold domains"/>
    <property type="match status" value="1"/>
</dbReference>
<dbReference type="PROSITE" id="PS00071">
    <property type="entry name" value="GAPDH"/>
    <property type="match status" value="1"/>
</dbReference>